<organism>
    <name type="scientific">Homo sapiens</name>
    <name type="common">Human</name>
    <dbReference type="NCBI Taxonomy" id="9606"/>
    <lineage>
        <taxon>Eukaryota</taxon>
        <taxon>Metazoa</taxon>
        <taxon>Chordata</taxon>
        <taxon>Craniata</taxon>
        <taxon>Vertebrata</taxon>
        <taxon>Euteleostomi</taxon>
        <taxon>Mammalia</taxon>
        <taxon>Eutheria</taxon>
        <taxon>Euarchontoglires</taxon>
        <taxon>Primates</taxon>
        <taxon>Haplorrhini</taxon>
        <taxon>Catarrhini</taxon>
        <taxon>Hominidae</taxon>
        <taxon>Homo</taxon>
    </lineage>
</organism>
<accession>Q9UKT9</accession>
<accession>B4DVV5</accession>
<accession>Q69BL6</accession>
<accession>Q69BL7</accession>
<accession>Q69BL8</accession>
<accession>Q69BL9</accession>
<accession>Q69BM0</accession>
<accession>Q69BM1</accession>
<accession>Q69BM2</accession>
<accession>Q69BM3</accession>
<accession>Q69BM5</accession>
<accession>Q8N574</accession>
<accession>Q8WWQ9</accession>
<accession>Q8WWR0</accession>
<accession>Q8WWR1</accession>
<accession>Q8WWR2</accession>
<accession>Q8WWR3</accession>
<gene>
    <name type="primary">IKZF3</name>
    <name type="synonym">ZNFN1A3</name>
</gene>
<name>IKZF3_HUMAN</name>
<evidence type="ECO:0000250" key="1">
    <source>
        <dbReference type="UniProtKB" id="O08900"/>
    </source>
</evidence>
<evidence type="ECO:0000255" key="2">
    <source>
        <dbReference type="PROSITE-ProRule" id="PRU00042"/>
    </source>
</evidence>
<evidence type="ECO:0000256" key="3">
    <source>
        <dbReference type="SAM" id="MobiDB-lite"/>
    </source>
</evidence>
<evidence type="ECO:0000269" key="4">
    <source>
    </source>
</evidence>
<evidence type="ECO:0000269" key="5">
    <source>
    </source>
</evidence>
<evidence type="ECO:0000269" key="6">
    <source>
    </source>
</evidence>
<evidence type="ECO:0000269" key="7">
    <source>
    </source>
</evidence>
<evidence type="ECO:0000269" key="8">
    <source>
    </source>
</evidence>
<evidence type="ECO:0000269" key="9">
    <source>
    </source>
</evidence>
<evidence type="ECO:0000269" key="10">
    <source>
    </source>
</evidence>
<evidence type="ECO:0000303" key="11">
    <source>
    </source>
</evidence>
<evidence type="ECO:0000303" key="12">
    <source>
    </source>
</evidence>
<evidence type="ECO:0000303" key="13">
    <source>
    </source>
</evidence>
<evidence type="ECO:0000305" key="14"/>
<evidence type="ECO:0007744" key="15">
    <source>
    </source>
</evidence>
<evidence type="ECO:0007744" key="16">
    <source>
    </source>
</evidence>
<reference key="1">
    <citation type="journal article" date="1999" name="Genomics">
        <title>Human aiolos, an ikaros-related zinc finger DNA binding protein: cDNA cloning, tissue expression pattern, and chromosomal mapping.</title>
        <authorList>
            <person name="Hosokawa Y."/>
            <person name="Maeda Y."/>
            <person name="Takahashi E."/>
            <person name="Suzuki M."/>
            <person name="Seto M."/>
        </authorList>
    </citation>
    <scope>NUCLEOTIDE SEQUENCE [MRNA] (ISOFORM 1)</scope>
    <source>
        <tissue>Lymphoma</tissue>
    </source>
</reference>
<reference key="2">
    <citation type="journal article" date="2001" name="Eur. J. Immunol.">
        <title>Both normal and leukemic B lymphocytes express multiple isoforms of the human Aiolos gene.</title>
        <authorList>
            <person name="Liippo J.P."/>
            <person name="Nera K.P."/>
            <person name="Veistinen E."/>
            <person name="Lahdesmaki A."/>
            <person name="Postila V."/>
            <person name="Kimby E."/>
            <person name="Riikonen P."/>
            <person name="Hammarstrom L."/>
            <person name="Pelkonen J."/>
            <person name="Lassila O."/>
        </authorList>
    </citation>
    <scope>NUCLEOTIDE SEQUENCE [MRNA] (ISOFORMS 2; 3; 4; 5 AND 6)</scope>
    <scope>ALTERNATIVE SPLICING</scope>
    <source>
        <tissue>Lymphoid tissue</tissue>
    </source>
</reference>
<reference key="3">
    <citation type="journal article" date="2007" name="J. Cell Sci.">
        <title>Combinatorial effects of splice variants modulate function of Aiolos.</title>
        <authorList>
            <person name="Caballero R."/>
            <person name="Setien F."/>
            <person name="Lopez-Serra L."/>
            <person name="Boix-Chornet M."/>
            <person name="Fraga M.F."/>
            <person name="Ropero S."/>
            <person name="Megias D."/>
            <person name="Alaminos M."/>
            <person name="Sanchez-Tapia E.M."/>
            <person name="Montoya M.C."/>
            <person name="Esteller M."/>
            <person name="Gonzalez-Sarmiento R."/>
            <person name="Ballestar E."/>
        </authorList>
    </citation>
    <scope>NUCLEOTIDE SEQUENCE [MRNA] (ISOFORMS 7; 8; 9; 10; 11; 12; 13; 14 AND 15)</scope>
    <scope>SUBUNIT</scope>
    <scope>SUBCELLULAR LOCATION</scope>
    <scope>TISSUE SPECIFICITY</scope>
    <scope>ALTERNATIVE SPLICING</scope>
</reference>
<reference key="4">
    <citation type="journal article" date="2004" name="Nat. Genet.">
        <title>Complete sequencing and characterization of 21,243 full-length human cDNAs.</title>
        <authorList>
            <person name="Ota T."/>
            <person name="Suzuki Y."/>
            <person name="Nishikawa T."/>
            <person name="Otsuki T."/>
            <person name="Sugiyama T."/>
            <person name="Irie R."/>
            <person name="Wakamatsu A."/>
            <person name="Hayashi K."/>
            <person name="Sato H."/>
            <person name="Nagai K."/>
            <person name="Kimura K."/>
            <person name="Makita H."/>
            <person name="Sekine M."/>
            <person name="Obayashi M."/>
            <person name="Nishi T."/>
            <person name="Shibahara T."/>
            <person name="Tanaka T."/>
            <person name="Ishii S."/>
            <person name="Yamamoto J."/>
            <person name="Saito K."/>
            <person name="Kawai Y."/>
            <person name="Isono Y."/>
            <person name="Nakamura Y."/>
            <person name="Nagahari K."/>
            <person name="Murakami K."/>
            <person name="Yasuda T."/>
            <person name="Iwayanagi T."/>
            <person name="Wagatsuma M."/>
            <person name="Shiratori A."/>
            <person name="Sudo H."/>
            <person name="Hosoiri T."/>
            <person name="Kaku Y."/>
            <person name="Kodaira H."/>
            <person name="Kondo H."/>
            <person name="Sugawara M."/>
            <person name="Takahashi M."/>
            <person name="Kanda K."/>
            <person name="Yokoi T."/>
            <person name="Furuya T."/>
            <person name="Kikkawa E."/>
            <person name="Omura Y."/>
            <person name="Abe K."/>
            <person name="Kamihara K."/>
            <person name="Katsuta N."/>
            <person name="Sato K."/>
            <person name="Tanikawa M."/>
            <person name="Yamazaki M."/>
            <person name="Ninomiya K."/>
            <person name="Ishibashi T."/>
            <person name="Yamashita H."/>
            <person name="Murakawa K."/>
            <person name="Fujimori K."/>
            <person name="Tanai H."/>
            <person name="Kimata M."/>
            <person name="Watanabe M."/>
            <person name="Hiraoka S."/>
            <person name="Chiba Y."/>
            <person name="Ishida S."/>
            <person name="Ono Y."/>
            <person name="Takiguchi S."/>
            <person name="Watanabe S."/>
            <person name="Yosida M."/>
            <person name="Hotuta T."/>
            <person name="Kusano J."/>
            <person name="Kanehori K."/>
            <person name="Takahashi-Fujii A."/>
            <person name="Hara H."/>
            <person name="Tanase T.-O."/>
            <person name="Nomura Y."/>
            <person name="Togiya S."/>
            <person name="Komai F."/>
            <person name="Hara R."/>
            <person name="Takeuchi K."/>
            <person name="Arita M."/>
            <person name="Imose N."/>
            <person name="Musashino K."/>
            <person name="Yuuki H."/>
            <person name="Oshima A."/>
            <person name="Sasaki N."/>
            <person name="Aotsuka S."/>
            <person name="Yoshikawa Y."/>
            <person name="Matsunawa H."/>
            <person name="Ichihara T."/>
            <person name="Shiohata N."/>
            <person name="Sano S."/>
            <person name="Moriya S."/>
            <person name="Momiyama H."/>
            <person name="Satoh N."/>
            <person name="Takami S."/>
            <person name="Terashima Y."/>
            <person name="Suzuki O."/>
            <person name="Nakagawa S."/>
            <person name="Senoh A."/>
            <person name="Mizoguchi H."/>
            <person name="Goto Y."/>
            <person name="Shimizu F."/>
            <person name="Wakebe H."/>
            <person name="Hishigaki H."/>
            <person name="Watanabe T."/>
            <person name="Sugiyama A."/>
            <person name="Takemoto M."/>
            <person name="Kawakami B."/>
            <person name="Yamazaki M."/>
            <person name="Watanabe K."/>
            <person name="Kumagai A."/>
            <person name="Itakura S."/>
            <person name="Fukuzumi Y."/>
            <person name="Fujimori Y."/>
            <person name="Komiyama M."/>
            <person name="Tashiro H."/>
            <person name="Tanigami A."/>
            <person name="Fujiwara T."/>
            <person name="Ono T."/>
            <person name="Yamada K."/>
            <person name="Fujii Y."/>
            <person name="Ozaki K."/>
            <person name="Hirao M."/>
            <person name="Ohmori Y."/>
            <person name="Kawabata A."/>
            <person name="Hikiji T."/>
            <person name="Kobatake N."/>
            <person name="Inagaki H."/>
            <person name="Ikema Y."/>
            <person name="Okamoto S."/>
            <person name="Okitani R."/>
            <person name="Kawakami T."/>
            <person name="Noguchi S."/>
            <person name="Itoh T."/>
            <person name="Shigeta K."/>
            <person name="Senba T."/>
            <person name="Matsumura K."/>
            <person name="Nakajima Y."/>
            <person name="Mizuno T."/>
            <person name="Morinaga M."/>
            <person name="Sasaki M."/>
            <person name="Togashi T."/>
            <person name="Oyama M."/>
            <person name="Hata H."/>
            <person name="Watanabe M."/>
            <person name="Komatsu T."/>
            <person name="Mizushima-Sugano J."/>
            <person name="Satoh T."/>
            <person name="Shirai Y."/>
            <person name="Takahashi Y."/>
            <person name="Nakagawa K."/>
            <person name="Okumura K."/>
            <person name="Nagase T."/>
            <person name="Nomura N."/>
            <person name="Kikuchi H."/>
            <person name="Masuho Y."/>
            <person name="Yamashita R."/>
            <person name="Nakai K."/>
            <person name="Yada T."/>
            <person name="Nakamura Y."/>
            <person name="Ohara O."/>
            <person name="Isogai T."/>
            <person name="Sugano S."/>
        </authorList>
    </citation>
    <scope>NUCLEOTIDE SEQUENCE [LARGE SCALE MRNA] (ISOFORM 16)</scope>
    <source>
        <tissue>Spleen</tissue>
        <tissue>Thymus</tissue>
    </source>
</reference>
<reference key="5">
    <citation type="journal article" date="2006" name="Nature">
        <title>DNA sequence of human chromosome 17 and analysis of rearrangement in the human lineage.</title>
        <authorList>
            <person name="Zody M.C."/>
            <person name="Garber M."/>
            <person name="Adams D.J."/>
            <person name="Sharpe T."/>
            <person name="Harrow J."/>
            <person name="Lupski J.R."/>
            <person name="Nicholson C."/>
            <person name="Searle S.M."/>
            <person name="Wilming L."/>
            <person name="Young S.K."/>
            <person name="Abouelleil A."/>
            <person name="Allen N.R."/>
            <person name="Bi W."/>
            <person name="Bloom T."/>
            <person name="Borowsky M.L."/>
            <person name="Bugalter B.E."/>
            <person name="Butler J."/>
            <person name="Chang J.L."/>
            <person name="Chen C.-K."/>
            <person name="Cook A."/>
            <person name="Corum B."/>
            <person name="Cuomo C.A."/>
            <person name="de Jong P.J."/>
            <person name="DeCaprio D."/>
            <person name="Dewar K."/>
            <person name="FitzGerald M."/>
            <person name="Gilbert J."/>
            <person name="Gibson R."/>
            <person name="Gnerre S."/>
            <person name="Goldstein S."/>
            <person name="Grafham D.V."/>
            <person name="Grocock R."/>
            <person name="Hafez N."/>
            <person name="Hagopian D.S."/>
            <person name="Hart E."/>
            <person name="Norman C.H."/>
            <person name="Humphray S."/>
            <person name="Jaffe D.B."/>
            <person name="Jones M."/>
            <person name="Kamal M."/>
            <person name="Khodiyar V.K."/>
            <person name="LaButti K."/>
            <person name="Laird G."/>
            <person name="Lehoczky J."/>
            <person name="Liu X."/>
            <person name="Lokyitsang T."/>
            <person name="Loveland J."/>
            <person name="Lui A."/>
            <person name="Macdonald P."/>
            <person name="Major J.E."/>
            <person name="Matthews L."/>
            <person name="Mauceli E."/>
            <person name="McCarroll S.A."/>
            <person name="Mihalev A.H."/>
            <person name="Mudge J."/>
            <person name="Nguyen C."/>
            <person name="Nicol R."/>
            <person name="O'Leary S.B."/>
            <person name="Osoegawa K."/>
            <person name="Schwartz D.C."/>
            <person name="Shaw-Smith C."/>
            <person name="Stankiewicz P."/>
            <person name="Steward C."/>
            <person name="Swarbreck D."/>
            <person name="Venkataraman V."/>
            <person name="Whittaker C.A."/>
            <person name="Yang X."/>
            <person name="Zimmer A.R."/>
            <person name="Bradley A."/>
            <person name="Hubbard T."/>
            <person name="Birren B.W."/>
            <person name="Rogers J."/>
            <person name="Lander E.S."/>
            <person name="Nusbaum C."/>
        </authorList>
    </citation>
    <scope>NUCLEOTIDE SEQUENCE [LARGE SCALE GENOMIC DNA]</scope>
</reference>
<reference key="6">
    <citation type="submission" date="2005-07" db="EMBL/GenBank/DDBJ databases">
        <authorList>
            <person name="Mural R.J."/>
            <person name="Istrail S."/>
            <person name="Sutton G.G."/>
            <person name="Florea L."/>
            <person name="Halpern A.L."/>
            <person name="Mobarry C.M."/>
            <person name="Lippert R."/>
            <person name="Walenz B."/>
            <person name="Shatkay H."/>
            <person name="Dew I."/>
            <person name="Miller J.R."/>
            <person name="Flanigan M.J."/>
            <person name="Edwards N.J."/>
            <person name="Bolanos R."/>
            <person name="Fasulo D."/>
            <person name="Halldorsson B.V."/>
            <person name="Hannenhalli S."/>
            <person name="Turner R."/>
            <person name="Yooseph S."/>
            <person name="Lu F."/>
            <person name="Nusskern D.R."/>
            <person name="Shue B.C."/>
            <person name="Zheng X.H."/>
            <person name="Zhong F."/>
            <person name="Delcher A.L."/>
            <person name="Huson D.H."/>
            <person name="Kravitz S.A."/>
            <person name="Mouchard L."/>
            <person name="Reinert K."/>
            <person name="Remington K.A."/>
            <person name="Clark A.G."/>
            <person name="Waterman M.S."/>
            <person name="Eichler E.E."/>
            <person name="Adams M.D."/>
            <person name="Hunkapiller M.W."/>
            <person name="Myers E.W."/>
            <person name="Venter J.C."/>
        </authorList>
    </citation>
    <scope>NUCLEOTIDE SEQUENCE [LARGE SCALE GENOMIC DNA]</scope>
</reference>
<reference key="7">
    <citation type="journal article" date="2004" name="Genome Res.">
        <title>The status, quality, and expansion of the NIH full-length cDNA project: the Mammalian Gene Collection (MGC).</title>
        <authorList>
            <consortium name="The MGC Project Team"/>
        </authorList>
    </citation>
    <scope>NUCLEOTIDE SEQUENCE [LARGE SCALE MRNA] (ISOFORM 1)</scope>
    <source>
        <tissue>Lymph</tissue>
    </source>
</reference>
<reference key="8">
    <citation type="journal article" date="1999" name="EMBO J.">
        <title>Aiolos transcription factor controls cell death in T cells by regulating Bcl-2 expression and its cellular localization.</title>
        <authorList>
            <person name="Romero F."/>
            <person name="Martinez-A C."/>
            <person name="Camonis J."/>
            <person name="Rebollo A."/>
        </authorList>
    </citation>
    <scope>FUNCTION</scope>
    <scope>INTERACTION WITH HRAS</scope>
    <scope>SUBCELLULAR LOCATION</scope>
    <scope>PHOSPHORYLATION</scope>
</reference>
<reference key="9">
    <citation type="journal article" date="2000" name="J. Biol. Chem.">
        <title>Eos and pegasus, two members of the Ikaros family of proteins with distinct DNA binding activities.</title>
        <authorList>
            <person name="Perdomo J."/>
            <person name="Holmes M."/>
            <person name="Chong B."/>
            <person name="Crossley M."/>
        </authorList>
    </citation>
    <scope>INTERACTION WITH IKZF4 AND IKZF5</scope>
</reference>
<reference key="10">
    <citation type="journal article" date="2001" name="J. Immunol.">
        <title>The association of Aiolos transcription factor and Bcl-xL is involved in the control of apoptosis.</title>
        <authorList>
            <person name="Rebollo A."/>
            <person name="Ayllon V."/>
            <person name="Fleischer A."/>
            <person name="Martinez C.A."/>
            <person name="Zaballos A."/>
        </authorList>
    </citation>
    <scope>INTERACTION WITH BCL21L</scope>
    <scope>PHOSPHORYLATION</scope>
</reference>
<reference key="11">
    <citation type="journal article" date="2010" name="Nat. Immunol.">
        <title>Activation of the aryl hydrocarbon receptor induces human type 1 regulatory T cell-like and Foxp3(+) regulatory T cells.</title>
        <authorList>
            <person name="Gandhi R."/>
            <person name="Kumar D."/>
            <person name="Burns E.J."/>
            <person name="Nadeau M."/>
            <person name="Dake B."/>
            <person name="Laroni A."/>
            <person name="Kozoriz D."/>
            <person name="Weiner H.L."/>
            <person name="Quintana F.J."/>
        </authorList>
    </citation>
    <scope>INTERACTION WITH FOXP3</scope>
    <scope>INDUCTION</scope>
</reference>
<reference key="12">
    <citation type="journal article" date="2011" name="BMC Syst. Biol.">
        <title>Initial characterization of the human central proteome.</title>
        <authorList>
            <person name="Burkard T.R."/>
            <person name="Planyavsky M."/>
            <person name="Kaupe I."/>
            <person name="Breitwieser F.P."/>
            <person name="Buerckstuemmer T."/>
            <person name="Bennett K.L."/>
            <person name="Superti-Furga G."/>
            <person name="Colinge J."/>
        </authorList>
    </citation>
    <scope>IDENTIFICATION BY MASS SPECTROMETRY [LARGE SCALE ANALYSIS]</scope>
</reference>
<reference key="13">
    <citation type="journal article" date="2014" name="J. Proteomics">
        <title>An enzyme assisted RP-RPLC approach for in-depth analysis of human liver phosphoproteome.</title>
        <authorList>
            <person name="Bian Y."/>
            <person name="Song C."/>
            <person name="Cheng K."/>
            <person name="Dong M."/>
            <person name="Wang F."/>
            <person name="Huang J."/>
            <person name="Sun D."/>
            <person name="Wang L."/>
            <person name="Ye M."/>
            <person name="Zou H."/>
        </authorList>
    </citation>
    <scope>PHOSPHORYLATION [LARGE SCALE ANALYSIS] AT THR-326</scope>
    <scope>IDENTIFICATION BY MASS SPECTROMETRY [LARGE SCALE ANALYSIS]</scope>
    <source>
        <tissue>Liver</tissue>
    </source>
</reference>
<reference key="14">
    <citation type="journal article" date="2017" name="Nat. Struct. Mol. Biol.">
        <title>Site-specific mapping of the human SUMO proteome reveals co-modification with phosphorylation.</title>
        <authorList>
            <person name="Hendriks I.A."/>
            <person name="Lyon D."/>
            <person name="Young C."/>
            <person name="Jensen L.J."/>
            <person name="Vertegaal A.C."/>
            <person name="Nielsen M.L."/>
        </authorList>
    </citation>
    <scope>SUMOYLATION [LARGE SCALE ANALYSIS] AT LYS-61; LYS-73; LYS-100 AND LYS-245</scope>
    <scope>IDENTIFICATION BY MASS SPECTROMETRY [LARGE SCALE ANALYSIS]</scope>
</reference>
<reference key="15">
    <citation type="journal article" date="2021" name="Nat. Immunol.">
        <title>A variant in human AIOLOS impairs adaptive immunity by interfering with IKAROS.</title>
        <authorList>
            <person name="Yamashita M."/>
            <person name="Kuehn H.S."/>
            <person name="Okuyama K."/>
            <person name="Okada S."/>
            <person name="Inoue Y."/>
            <person name="Mitsuiki N."/>
            <person name="Imai K."/>
            <person name="Takagi M."/>
            <person name="Kanegane H."/>
            <person name="Takeuchi M."/>
            <person name="Shimojo N."/>
            <person name="Tsumura M."/>
            <person name="Padhi A.K."/>
            <person name="Zhang K.Y.J."/>
            <person name="Boisson B."/>
            <person name="Casanova J.L."/>
            <person name="Ohara O."/>
            <person name="Rosenzweig S.D."/>
            <person name="Taniuchi I."/>
            <person name="Morio T."/>
        </authorList>
    </citation>
    <scope>INVOLVEMENT IN IMD84</scope>
    <scope>VARIANT IMD84 ARG-159</scope>
    <scope>CHARACTERIZATION OF VARIANT IMD84 ARG-159</scope>
    <scope>FUNCTION</scope>
    <scope>SUBUNIT</scope>
    <scope>SUBCELLULAR LOCATION</scope>
    <scope>DOMAIN</scope>
    <scope>REGION</scope>
</reference>
<reference key="16">
    <citation type="journal article" date="2011" name="Nature">
        <title>Exome sequencing identifies frequent mutation of the SWI/SNF complex gene PBRM1 in renal carcinoma.</title>
        <authorList>
            <person name="Varela I."/>
            <person name="Tarpey P."/>
            <person name="Raine K."/>
            <person name="Huang D."/>
            <person name="Ong C.K."/>
            <person name="Stephens P."/>
            <person name="Davies H."/>
            <person name="Jones D."/>
            <person name="Lin M.L."/>
            <person name="Teague J."/>
            <person name="Bignell G."/>
            <person name="Butler A."/>
            <person name="Cho J."/>
            <person name="Dalgliesh G.L."/>
            <person name="Galappaththige D."/>
            <person name="Greenman C."/>
            <person name="Hardy C."/>
            <person name="Jia M."/>
            <person name="Latimer C."/>
            <person name="Lau K.W."/>
            <person name="Marshall J."/>
            <person name="McLaren S."/>
            <person name="Menzies A."/>
            <person name="Mudie L."/>
            <person name="Stebbings L."/>
            <person name="Largaespada D.A."/>
            <person name="Wessels L.F.A."/>
            <person name="Richard S."/>
            <person name="Kahnoski R.J."/>
            <person name="Anema J."/>
            <person name="Tuveson D.A."/>
            <person name="Perez-Mancera P.A."/>
            <person name="Mustonen V."/>
            <person name="Fischer A."/>
            <person name="Adams D.J."/>
            <person name="Rust A."/>
            <person name="Chan-On W."/>
            <person name="Subimerb C."/>
            <person name="Dykema K."/>
            <person name="Furge K."/>
            <person name="Campbell P.J."/>
            <person name="Teh B.T."/>
            <person name="Stratton M.R."/>
            <person name="Futreal P.A."/>
        </authorList>
    </citation>
    <scope>VARIANT GLN-277</scope>
</reference>
<feature type="chain" id="PRO_0000047090" description="Zinc finger protein Aiolos">
    <location>
        <begin position="1"/>
        <end position="509"/>
    </location>
</feature>
<feature type="zinc finger region" description="C2H2-type 1" evidence="2">
    <location>
        <begin position="118"/>
        <end position="140"/>
    </location>
</feature>
<feature type="zinc finger region" description="C2H2-type 2" evidence="2">
    <location>
        <begin position="146"/>
        <end position="168"/>
    </location>
</feature>
<feature type="zinc finger region" description="C2H2-type 3" evidence="2">
    <location>
        <begin position="174"/>
        <end position="196"/>
    </location>
</feature>
<feature type="zinc finger region" description="C2H2-type 4; atypical" evidence="2">
    <location>
        <begin position="202"/>
        <end position="224"/>
    </location>
</feature>
<feature type="zinc finger region" description="C2H2-type 5" evidence="2">
    <location>
        <begin position="452"/>
        <end position="474"/>
    </location>
</feature>
<feature type="zinc finger region" description="C2H2-type 6; atypical" evidence="2">
    <location>
        <begin position="480"/>
        <end position="504"/>
    </location>
</feature>
<feature type="region of interest" description="Disordered" evidence="3">
    <location>
        <begin position="1"/>
        <end position="86"/>
    </location>
</feature>
<feature type="region of interest" description="Disordered" evidence="3">
    <location>
        <begin position="364"/>
        <end position="394"/>
    </location>
</feature>
<feature type="region of interest" description="Mediates homodimerization and heterodimerization" evidence="10">
    <location>
        <begin position="452"/>
        <end position="504"/>
    </location>
</feature>
<feature type="compositionally biased region" description="Polar residues" evidence="3">
    <location>
        <begin position="1"/>
        <end position="19"/>
    </location>
</feature>
<feature type="compositionally biased region" description="Basic and acidic residues" evidence="3">
    <location>
        <begin position="56"/>
        <end position="72"/>
    </location>
</feature>
<feature type="compositionally biased region" description="Basic and acidic residues" evidence="3">
    <location>
        <begin position="385"/>
        <end position="394"/>
    </location>
</feature>
<feature type="modified residue" description="Phosphoserine" evidence="1">
    <location>
        <position position="22"/>
    </location>
</feature>
<feature type="modified residue" description="Phosphoserine" evidence="1">
    <location>
        <position position="42"/>
    </location>
</feature>
<feature type="modified residue" description="Phosphothreonine" evidence="15">
    <location>
        <position position="326"/>
    </location>
</feature>
<feature type="modified residue" description="Phosphoserine" evidence="1">
    <location>
        <position position="378"/>
    </location>
</feature>
<feature type="cross-link" description="Glycyl lysine isopeptide (Lys-Gly) (interchain with G-Cter in SUMO2)" evidence="16">
    <location>
        <position position="61"/>
    </location>
</feature>
<feature type="cross-link" description="Glycyl lysine isopeptide (Lys-Gly) (interchain with G-Cter in SUMO2)" evidence="16">
    <location>
        <position position="73"/>
    </location>
</feature>
<feature type="cross-link" description="Glycyl lysine isopeptide (Lys-Gly) (interchain with G-Cter in SUMO2)" evidence="16">
    <location>
        <position position="100"/>
    </location>
</feature>
<feature type="cross-link" description="Glycyl lysine isopeptide (Lys-Gly) (interchain with G-Cter in SUMO2)" evidence="16">
    <location>
        <position position="245"/>
    </location>
</feature>
<feature type="splice variant" id="VSP_055353" description="In isoform 16." evidence="12">
    <location>
        <begin position="1"/>
        <end position="247"/>
    </location>
</feature>
<feature type="splice variant" id="VSP_041274" description="In isoform 7 and isoform 8." evidence="13">
    <location>
        <begin position="21"/>
        <end position="54"/>
    </location>
</feature>
<feature type="splice variant" id="VSP_041275" description="In isoform 12." evidence="13">
    <location>
        <begin position="55"/>
        <end position="275"/>
    </location>
</feature>
<feature type="splice variant" id="VSP_041276" description="In isoform 11." evidence="13">
    <location>
        <begin position="55"/>
        <end position="236"/>
    </location>
</feature>
<feature type="splice variant" id="VSP_041277" description="In isoform 10." evidence="13">
    <location>
        <begin position="55"/>
        <end position="197"/>
    </location>
</feature>
<feature type="splice variant" id="VSP_041278" description="In isoform 9." evidence="13">
    <location>
        <begin position="55"/>
        <end position="141"/>
    </location>
</feature>
<feature type="splice variant" id="VSP_041279" description="In isoform 13." evidence="13">
    <location>
        <begin position="142"/>
        <end position="275"/>
    </location>
</feature>
<feature type="splice variant" id="VSP_006841" description="In isoform 5." evidence="11">
    <location>
        <begin position="142"/>
        <end position="236"/>
    </location>
</feature>
<feature type="splice variant" id="VSP_006840" description="In isoform 2 and isoform 15." evidence="11 13">
    <location>
        <begin position="142"/>
        <end position="197"/>
    </location>
</feature>
<feature type="splice variant" id="VSP_006843" description="In isoform 6." evidence="11">
    <location>
        <begin position="198"/>
        <end position="275"/>
    </location>
</feature>
<feature type="splice variant" id="VSP_006842" description="In isoform 3 and isoform 8." evidence="11 13">
    <location>
        <begin position="198"/>
        <end position="236"/>
    </location>
</feature>
<feature type="splice variant" id="VSP_006844" description="In isoform 4." evidence="11">
    <location>
        <begin position="237"/>
        <end position="275"/>
    </location>
</feature>
<feature type="splice variant" id="VSP_041280" description="In isoform 14 and isoform 15." evidence="13">
    <original>ASAEARHIKAEMGSERALVLDRLASNV</original>
    <variation>GTGWGWVELSHLGIRLQDLNVPWCRLH</variation>
    <location>
        <begin position="237"/>
        <end position="263"/>
    </location>
</feature>
<feature type="splice variant" id="VSP_041281" description="In isoform 14." evidence="13">
    <location>
        <begin position="264"/>
        <end position="509"/>
    </location>
</feature>
<feature type="sequence variant" id="VAR_086041" description="In IMD84; no effect on homodimerization activity; no effect on heterodimerization activity; changed localization; changed DNA-binding transcription activator activity; changed sequence-specific DNA binding; binds novel and non-specific DNA motifs and acts as a dominant negative through its homodimerization and heterodimerization activities; dbSNP:rs2143873917." evidence="10">
    <original>G</original>
    <variation>R</variation>
    <location>
        <position position="159"/>
    </location>
</feature>
<feature type="sequence variant" id="VAR_064724" description="Found in a renal cell carcinoma sample; somatic mutation." evidence="9">
    <original>E</original>
    <variation>Q</variation>
    <location>
        <position position="277"/>
    </location>
</feature>
<feature type="sequence conflict" description="In Ref. 1; AAF13493 and 2; CAC80427/CAC80428/CAC80429/CAC80430/CAC80431." evidence="14" ref="1 2">
    <original>R</original>
    <variation>C</variation>
    <location>
        <position position="321"/>
    </location>
</feature>
<feature type="sequence conflict" description="In Ref. 1; AAF13493 and 2; CAC80427/CAC80428/CAC80429/CAC80430/CAC80431." evidence="14" ref="1 2">
    <original>K</original>
    <variation>R</variation>
    <location>
        <position position="361"/>
    </location>
</feature>
<feature type="sequence conflict" description="In Ref. 1; AAF13493 and 2; CAC80427/CAC80428/CAC80429/CAC80430/CAC80431." evidence="14" ref="1 2">
    <original>H</original>
    <variation>L</variation>
    <location>
        <position position="365"/>
    </location>
</feature>
<feature type="sequence conflict" description="In Ref. 1; AAF13493 and 2; CAC80427/CAC80428/CAC80429/CAC80430/CAC80431." evidence="14" ref="1 2">
    <original>N</original>
    <variation>D</variation>
    <location>
        <position position="443"/>
    </location>
</feature>
<feature type="sequence conflict" description="In Ref. 1; AAF13493 and 2; CAC80427/CAC80428/CAC80429/CAC80430/CAC80431." evidence="14" ref="1 2">
    <original>Y</original>
    <variation>D</variation>
    <location>
        <position position="487"/>
    </location>
</feature>
<feature type="sequence conflict" description="In Ref. 1; AAF13493 and 2; CAC80427/CAC80428/CAC80429/CAC80430/CAC80431." evidence="14" ref="1 2">
    <original>A</original>
    <variation>S</variation>
    <location>
        <position position="506"/>
    </location>
</feature>
<comment type="function">
    <text evidence="4 10">Transcription factor that plays an important role in the regulation of lymphocyte differentiation. Plays an essential role in regulation of B-cell differentiation, proliferation and maturation to an effector state. Involved in regulating BCL2 expression and controlling apoptosis in T-cells in an IL2-dependent manner.</text>
</comment>
<comment type="subunit">
    <text evidence="4 5 6 7 8 10">Homodimer. Heterodimer with other IKAROS family members. Interacts with IKZF4 and IKZF5. Interacts with IKZF1. Interacts with HRAS. Interacts with FOXP3; this interaction may be required for silencing target genes and regulating the suppressive activity of FOXP3-positive regulatory T-cells (Treg). Interacts with BCL21L isoform Bcl-X(L); this interaction blocks the anti-apoptotic role of BCL21L. Associates with histone deacetylase complexes containing HDAC1, MTA2 and SIN3A.</text>
</comment>
<comment type="interaction">
    <interactant intactId="EBI-747204">
        <id>Q9UKT9</id>
    </interactant>
    <interactant intactId="EBI-351267">
        <id>O94929</id>
        <label>ABLIM3</label>
    </interactant>
    <organismsDiffer>false</organismsDiffer>
    <experiments>4</experiments>
</comment>
<comment type="interaction">
    <interactant intactId="EBI-747204">
        <id>Q9UKT9</id>
    </interactant>
    <interactant intactId="EBI-11961672">
        <id>O94929-2</id>
        <label>ABLIM3</label>
    </interactant>
    <organismsDiffer>false</organismsDiffer>
    <experiments>3</experiments>
</comment>
<comment type="interaction">
    <interactant intactId="EBI-747204">
        <id>Q9UKT9</id>
    </interactant>
    <interactant intactId="EBI-8643161">
        <id>Q9NX04</id>
        <label>AIRIM</label>
    </interactant>
    <organismsDiffer>false</organismsDiffer>
    <experiments>6</experiments>
</comment>
<comment type="interaction">
    <interactant intactId="EBI-747204">
        <id>Q9UKT9</id>
    </interactant>
    <interactant intactId="EBI-16428921">
        <id>A0A0S2Z4Y8</id>
        <label>AKAP10</label>
    </interactant>
    <organismsDiffer>false</organismsDiffer>
    <experiments>3</experiments>
</comment>
<comment type="interaction">
    <interactant intactId="EBI-747204">
        <id>Q9UKT9</id>
    </interactant>
    <interactant intactId="EBI-9641546">
        <id>Q99996-2</id>
        <label>AKAP9</label>
    </interactant>
    <organismsDiffer>false</organismsDiffer>
    <experiments>3</experiments>
</comment>
<comment type="interaction">
    <interactant intactId="EBI-747204">
        <id>Q9UKT9</id>
    </interactant>
    <interactant intactId="EBI-11954519">
        <id>Q49AR9</id>
        <label>ANKS1A</label>
    </interactant>
    <organismsDiffer>false</organismsDiffer>
    <experiments>5</experiments>
</comment>
<comment type="interaction">
    <interactant intactId="EBI-747204">
        <id>Q9UKT9</id>
    </interactant>
    <interactant intactId="EBI-745213">
        <id>P29972</id>
        <label>AQP1</label>
    </interactant>
    <organismsDiffer>false</organismsDiffer>
    <experiments>6</experiments>
</comment>
<comment type="interaction">
    <interactant intactId="EBI-747204">
        <id>Q9UKT9</id>
    </interactant>
    <interactant intactId="EBI-1642523">
        <id>Q15052</id>
        <label>ARHGEF6</label>
    </interactant>
    <organismsDiffer>false</organismsDiffer>
    <experiments>3</experiments>
</comment>
<comment type="interaction">
    <interactant intactId="EBI-747204">
        <id>Q9UKT9</id>
    </interactant>
    <interactant intactId="EBI-742909">
        <id>Q9H6L4</id>
        <label>ARMC7</label>
    </interactant>
    <organismsDiffer>false</organismsDiffer>
    <experiments>9</experiments>
</comment>
<comment type="interaction">
    <interactant intactId="EBI-747204">
        <id>Q9UKT9</id>
    </interactant>
    <interactant intactId="EBI-3923949">
        <id>Q8N8Y2</id>
        <label>ATP6V0D2</label>
    </interactant>
    <organismsDiffer>false</organismsDiffer>
    <experiments>3</experiments>
</comment>
<comment type="interaction">
    <interactant intactId="EBI-747204">
        <id>Q9UKT9</id>
    </interactant>
    <interactant intactId="EBI-1166928">
        <id>Q8N5M1</id>
        <label>ATPAF2</label>
    </interactant>
    <organismsDiffer>false</organismsDiffer>
    <experiments>10</experiments>
</comment>
<comment type="interaction">
    <interactant intactId="EBI-747204">
        <id>Q9UKT9</id>
    </interactant>
    <interactant intactId="EBI-1050106">
        <id>O75934</id>
        <label>BCAS2</label>
    </interactant>
    <organismsDiffer>false</organismsDiffer>
    <experiments>5</experiments>
</comment>
<comment type="interaction">
    <interactant intactId="EBI-747204">
        <id>Q9UKT9</id>
    </interactant>
    <interactant intactId="EBI-2105445">
        <id>P51451</id>
        <label>BLK</label>
    </interactant>
    <organismsDiffer>false</organismsDiffer>
    <experiments>3</experiments>
</comment>
<comment type="interaction">
    <interactant intactId="EBI-747204">
        <id>Q9UKT9</id>
    </interactant>
    <interactant intactId="EBI-2548012">
        <id>Q9H2G9</id>
        <label>BLZF1</label>
    </interactant>
    <organismsDiffer>false</organismsDiffer>
    <experiments>3</experiments>
</comment>
<comment type="interaction">
    <interactant intactId="EBI-747204">
        <id>Q9UKT9</id>
    </interactant>
    <interactant intactId="EBI-358049">
        <id>Q13895</id>
        <label>BYSL</label>
    </interactant>
    <organismsDiffer>false</organismsDiffer>
    <experiments>3</experiments>
</comment>
<comment type="interaction">
    <interactant intactId="EBI-747204">
        <id>Q9UKT9</id>
    </interactant>
    <interactant intactId="EBI-739879">
        <id>Q53TS8</id>
        <label>C2CD6</label>
    </interactant>
    <organismsDiffer>false</organismsDiffer>
    <experiments>3</experiments>
</comment>
<comment type="interaction">
    <interactant intactId="EBI-747204">
        <id>Q9UKT9</id>
    </interactant>
    <interactant intactId="EBI-10311131">
        <id>Q9NP86</id>
        <label>CABP5</label>
    </interactant>
    <organismsDiffer>false</organismsDiffer>
    <experiments>5</experiments>
</comment>
<comment type="interaction">
    <interactant intactId="EBI-747204">
        <id>Q9UKT9</id>
    </interactant>
    <interactant intactId="EBI-11530605">
        <id>Q9H257-2</id>
        <label>CARD9</label>
    </interactant>
    <organismsDiffer>false</organismsDiffer>
    <experiments>3</experiments>
</comment>
<comment type="interaction">
    <interactant intactId="EBI-747204">
        <id>Q9UKT9</id>
    </interactant>
    <interactant intactId="EBI-744545">
        <id>Q8NEC5</id>
        <label>CATSPER1</label>
    </interactant>
    <organismsDiffer>false</organismsDiffer>
    <experiments>3</experiments>
</comment>
<comment type="interaction">
    <interactant intactId="EBI-747204">
        <id>Q9UKT9</id>
    </interactant>
    <interactant intactId="EBI-10171570">
        <id>Q68D86</id>
        <label>CCDC102B</label>
    </interactant>
    <organismsDiffer>false</organismsDiffer>
    <experiments>3</experiments>
</comment>
<comment type="interaction">
    <interactant intactId="EBI-747204">
        <id>Q9UKT9</id>
    </interactant>
    <interactant intactId="EBI-1104933">
        <id>Q8N4L8</id>
        <label>CCDC24</label>
    </interactant>
    <organismsDiffer>false</organismsDiffer>
    <experiments>3</experiments>
</comment>
<comment type="interaction">
    <interactant intactId="EBI-747204">
        <id>Q9UKT9</id>
    </interactant>
    <interactant intactId="EBI-10961624">
        <id>Q2TAC2-2</id>
        <label>CCDC57</label>
    </interactant>
    <organismsDiffer>false</organismsDiffer>
    <experiments>5</experiments>
</comment>
<comment type="interaction">
    <interactant intactId="EBI-747204">
        <id>Q9UKT9</id>
    </interactant>
    <interactant intactId="EBI-10175300">
        <id>Q8TD31-3</id>
        <label>CCHCR1</label>
    </interactant>
    <organismsDiffer>false</organismsDiffer>
    <experiments>3</experiments>
</comment>
<comment type="interaction">
    <interactant intactId="EBI-747204">
        <id>Q9UKT9</id>
    </interactant>
    <interactant intactId="EBI-295634">
        <id>Q16543</id>
        <label>CDC37</label>
    </interactant>
    <organismsDiffer>false</organismsDiffer>
    <experiments>3</experiments>
</comment>
<comment type="interaction">
    <interactant intactId="EBI-747204">
        <id>Q9UKT9</id>
    </interactant>
    <interactant intactId="EBI-374980">
        <id>O00311</id>
        <label>CDC7</label>
    </interactant>
    <organismsDiffer>false</organismsDiffer>
    <experiments>3</experiments>
</comment>
<comment type="interaction">
    <interactant intactId="EBI-747204">
        <id>Q9UKT9</id>
    </interactant>
    <interactant intactId="EBI-746238">
        <id>Q07002</id>
        <label>CDK18</label>
    </interactant>
    <organismsDiffer>false</organismsDiffer>
    <experiments>3</experiments>
</comment>
<comment type="interaction">
    <interactant intactId="EBI-747204">
        <id>Q9UKT9</id>
    </interactant>
    <interactant intactId="EBI-295644">
        <id>P11802</id>
        <label>CDK4</label>
    </interactant>
    <organismsDiffer>false</organismsDiffer>
    <experiments>6</experiments>
</comment>
<comment type="interaction">
    <interactant intactId="EBI-747204">
        <id>Q9UKT9</id>
    </interactant>
    <interactant intactId="EBI-375077">
        <id>P38936</id>
        <label>CDKN1A</label>
    </interactant>
    <organismsDiffer>false</organismsDiffer>
    <experiments>3</experiments>
</comment>
<comment type="interaction">
    <interactant intactId="EBI-747204">
        <id>Q9UKT9</id>
    </interactant>
    <interactant intactId="EBI-745859">
        <id>P55273</id>
        <label>CDKN2D</label>
    </interactant>
    <organismsDiffer>false</organismsDiffer>
    <experiments>5</experiments>
</comment>
<comment type="interaction">
    <interactant intactId="EBI-747204">
        <id>Q9UKT9</id>
    </interactant>
    <interactant intactId="EBI-749051">
        <id>Q8IYR0</id>
        <label>CFAP206</label>
    </interactant>
    <organismsDiffer>false</organismsDiffer>
    <experiments>3</experiments>
</comment>
<comment type="interaction">
    <interactant intactId="EBI-747204">
        <id>Q9UKT9</id>
    </interactant>
    <interactant intactId="EBI-2321769">
        <id>Q9Y6H1</id>
        <label>CHCHD2</label>
    </interactant>
    <organismsDiffer>false</organismsDiffer>
    <experiments>4</experiments>
</comment>
<comment type="interaction">
    <interactant intactId="EBI-747204">
        <id>Q9UKT9</id>
    </interactant>
    <interactant intactId="EBI-456371">
        <id>P61024</id>
        <label>CKS1B</label>
    </interactant>
    <organismsDiffer>false</organismsDiffer>
    <experiments>3</experiments>
</comment>
<comment type="interaction">
    <interactant intactId="EBI-747204">
        <id>Q9UKT9</id>
    </interactant>
    <interactant intactId="EBI-11980535">
        <id>P51800-3</id>
        <label>CLCNKA</label>
    </interactant>
    <organismsDiffer>false</organismsDiffer>
    <experiments>3</experiments>
</comment>
<comment type="interaction">
    <interactant intactId="EBI-747204">
        <id>Q9UKT9</id>
    </interactant>
    <interactant intactId="EBI-12012272">
        <id>Q9UBL6-2</id>
        <label>CPNE7</label>
    </interactant>
    <organismsDiffer>false</organismsDiffer>
    <experiments>3</experiments>
</comment>
<comment type="interaction">
    <interactant intactId="EBI-747204">
        <id>Q9UKT9</id>
    </interactant>
    <interactant intactId="EBI-7519711">
        <id>P53673</id>
        <label>CRYBA4</label>
    </interactant>
    <organismsDiffer>false</organismsDiffer>
    <experiments>3</experiments>
</comment>
<comment type="interaction">
    <interactant intactId="EBI-747204">
        <id>Q9UKT9</id>
    </interactant>
    <interactant intactId="EBI-10171902">
        <id>P56545-3</id>
        <label>CTBP2</label>
    </interactant>
    <organismsDiffer>false</organismsDiffer>
    <experiments>3</experiments>
</comment>
<comment type="interaction">
    <interactant intactId="EBI-747204">
        <id>Q9UKT9</id>
    </interactant>
    <interactant intactId="EBI-740376">
        <id>Q86UW9</id>
        <label>DTX2</label>
    </interactant>
    <organismsDiffer>false</organismsDiffer>
    <experiments>3</experiments>
</comment>
<comment type="interaction">
    <interactant intactId="EBI-747204">
        <id>Q9UKT9</id>
    </interactant>
    <interactant intactId="EBI-743105">
        <id>Q5JVL4</id>
        <label>EFHC1</label>
    </interactant>
    <organismsDiffer>false</organismsDiffer>
    <experiments>13</experiments>
</comment>
<comment type="interaction">
    <interactant intactId="EBI-747204">
        <id>Q9UKT9</id>
    </interactant>
    <interactant intactId="EBI-1175354">
        <id>Q9H6Z9</id>
        <label>EGLN3</label>
    </interactant>
    <organismsDiffer>false</organismsDiffer>
    <experiments>3</experiments>
</comment>
<comment type="interaction">
    <interactant intactId="EBI-747204">
        <id>Q9UKT9</id>
    </interactant>
    <interactant intactId="EBI-2339219">
        <id>Q08426</id>
        <label>EHHADH</label>
    </interactant>
    <organismsDiffer>false</organismsDiffer>
    <experiments>3</experiments>
</comment>
<comment type="interaction">
    <interactant intactId="EBI-747204">
        <id>Q9UKT9</id>
    </interactant>
    <interactant intactId="EBI-359031">
        <id>Q15006</id>
        <label>EMC2</label>
    </interactant>
    <organismsDiffer>false</organismsDiffer>
    <experiments>3</experiments>
</comment>
<comment type="interaction">
    <interactant intactId="EBI-747204">
        <id>Q9UKT9</id>
    </interactant>
    <interactant intactId="EBI-744099">
        <id>Q9H0I2</id>
        <label>ENKD1</label>
    </interactant>
    <organismsDiffer>false</organismsDiffer>
    <experiments>3</experiments>
</comment>
<comment type="interaction">
    <interactant intactId="EBI-747204">
        <id>Q9UKT9</id>
    </interactant>
    <interactant intactId="EBI-10182490">
        <id>O15197-2</id>
        <label>EPHB6</label>
    </interactant>
    <organismsDiffer>false</organismsDiffer>
    <experiments>3</experiments>
</comment>
<comment type="interaction">
    <interactant intactId="EBI-747204">
        <id>Q9UKT9</id>
    </interactant>
    <interactant intactId="EBI-742102">
        <id>Q8IYI6</id>
        <label>EXOC8</label>
    </interactant>
    <organismsDiffer>false</organismsDiffer>
    <experiments>7</experiments>
</comment>
<comment type="interaction">
    <interactant intactId="EBI-747204">
        <id>Q9UKT9</id>
    </interactant>
    <interactant intactId="EBI-371876">
        <id>Q9NQT4</id>
        <label>EXOSC5</label>
    </interactant>
    <organismsDiffer>false</organismsDiffer>
    <experiments>7</experiments>
</comment>
<comment type="interaction">
    <interactant intactId="EBI-747204">
        <id>Q9UKT9</id>
    </interactant>
    <interactant intactId="EBI-11986315">
        <id>Q9H5Z6-2</id>
        <label>FAM124B</label>
    </interactant>
    <organismsDiffer>false</organismsDiffer>
    <experiments>3</experiments>
</comment>
<comment type="interaction">
    <interactant intactId="EBI-747204">
        <id>Q9UKT9</id>
    </interactant>
    <interactant intactId="EBI-742802">
        <id>Q9Y247</id>
        <label>FAM50B</label>
    </interactant>
    <organismsDiffer>false</organismsDiffer>
    <experiments>3</experiments>
</comment>
<comment type="interaction">
    <interactant intactId="EBI-747204">
        <id>Q9UKT9</id>
    </interactant>
    <interactant intactId="EBI-2339898">
        <id>Q9NW38</id>
        <label>FANCL</label>
    </interactant>
    <organismsDiffer>false</organismsDiffer>
    <experiments>3</experiments>
</comment>
<comment type="interaction">
    <interactant intactId="EBI-747204">
        <id>Q9UKT9</id>
    </interactant>
    <interactant intactId="EBI-2513774">
        <id>O95363</id>
        <label>FARS2</label>
    </interactant>
    <organismsDiffer>false</organismsDiffer>
    <experiments>6</experiments>
</comment>
<comment type="interaction">
    <interactant intactId="EBI-747204">
        <id>Q9UKT9</id>
    </interactant>
    <interactant intactId="EBI-10244131">
        <id>Q8TES7-6</id>
        <label>FBF1</label>
    </interactant>
    <organismsDiffer>false</organismsDiffer>
    <experiments>3</experiments>
</comment>
<comment type="interaction">
    <interactant intactId="EBI-747204">
        <id>Q9UKT9</id>
    </interactant>
    <interactant intactId="EBI-741101">
        <id>Q13643</id>
        <label>FHL3</label>
    </interactant>
    <organismsDiffer>false</organismsDiffer>
    <experiments>4</experiments>
</comment>
<comment type="interaction">
    <interactant intactId="EBI-747204">
        <id>Q9UKT9</id>
    </interactant>
    <interactant intactId="EBI-983719">
        <id>Q9BZS1</id>
        <label>FOXP3</label>
    </interactant>
    <organismsDiffer>false</organismsDiffer>
    <experiments>2</experiments>
</comment>
<comment type="interaction">
    <interactant intactId="EBI-747204">
        <id>Q9UKT9</id>
    </interactant>
    <interactant intactId="EBI-725515">
        <id>O43559</id>
        <label>FRS3</label>
    </interactant>
    <organismsDiffer>false</organismsDiffer>
    <experiments>3</experiments>
</comment>
<comment type="interaction">
    <interactant intactId="EBI-747204">
        <id>Q9UKT9</id>
    </interactant>
    <interactant intactId="EBI-744104">
        <id>P55040</id>
        <label>GEM</label>
    </interactant>
    <organismsDiffer>false</organismsDiffer>
    <experiments>8</experiments>
</comment>
<comment type="interaction">
    <interactant intactId="EBI-747204">
        <id>Q9UKT9</id>
    </interactant>
    <interactant intactId="EBI-11163335">
        <id>Q9NYA3</id>
        <label>GOLGA6A</label>
    </interactant>
    <organismsDiffer>false</organismsDiffer>
    <experiments>3</experiments>
</comment>
<comment type="interaction">
    <interactant intactId="EBI-747204">
        <id>Q9UKT9</id>
    </interactant>
    <interactant intactId="EBI-401755">
        <id>P62993</id>
        <label>GRB2</label>
    </interactant>
    <organismsDiffer>false</organismsDiffer>
    <experiments>8</experiments>
</comment>
<comment type="interaction">
    <interactant intactId="EBI-747204">
        <id>Q9UKT9</id>
    </interactant>
    <interactant intactId="EBI-352986">
        <id>P52597</id>
        <label>HNRNPF</label>
    </interactant>
    <organismsDiffer>false</organismsDiffer>
    <experiments>3</experiments>
</comment>
<comment type="interaction">
    <interactant intactId="EBI-747204">
        <id>Q9UKT9</id>
    </interactant>
    <interactant intactId="EBI-1752118">
        <id>P31273</id>
        <label>HOXC8</label>
    </interactant>
    <organismsDiffer>false</organismsDiffer>
    <experiments>3</experiments>
</comment>
<comment type="interaction">
    <interactant intactId="EBI-747204">
        <id>Q9UKT9</id>
    </interactant>
    <interactant intactId="EBI-739361">
        <id>Q9UBY9</id>
        <label>HSPB7</label>
    </interactant>
    <organismsDiffer>false</organismsDiffer>
    <experiments>3</experiments>
</comment>
<comment type="interaction">
    <interactant intactId="EBI-747204">
        <id>Q9UKT9</id>
    </interactant>
    <interactant intactId="EBI-747204">
        <id>Q9UKT9</id>
        <label>IKZF3</label>
    </interactant>
    <organismsDiffer>false</organismsDiffer>
    <experiments>4</experiments>
</comment>
<comment type="interaction">
    <interactant intactId="EBI-747204">
        <id>Q9UKT9</id>
    </interactant>
    <interactant intactId="EBI-1640423">
        <id>Q9H2S9</id>
        <label>IKZF4</label>
    </interactant>
    <organismsDiffer>false</organismsDiffer>
    <experiments>2</experiments>
</comment>
<comment type="interaction">
    <interactant intactId="EBI-747204">
        <id>Q9UKT9</id>
    </interactant>
    <interactant intactId="EBI-2685636">
        <id>Q9H5V7</id>
        <label>IKZF5</label>
    </interactant>
    <organismsDiffer>false</organismsDiffer>
    <experiments>3</experiments>
</comment>
<comment type="interaction">
    <interactant intactId="EBI-747204">
        <id>Q9UKT9</id>
    </interactant>
    <interactant intactId="EBI-488533">
        <id>Q8WYH8</id>
        <label>ING5</label>
    </interactant>
    <organismsDiffer>false</organismsDiffer>
    <experiments>3</experiments>
</comment>
<comment type="interaction">
    <interactant intactId="EBI-747204">
        <id>Q9UKT9</id>
    </interactant>
    <interactant intactId="EBI-2556193">
        <id>Q63ZY3</id>
        <label>KANK2</label>
    </interactant>
    <organismsDiffer>false</organismsDiffer>
    <experiments>3</experiments>
</comment>
<comment type="interaction">
    <interactant intactId="EBI-747204">
        <id>Q9UKT9</id>
    </interactant>
    <interactant intactId="EBI-399080">
        <id>Q92993</id>
        <label>KAT5</label>
    </interactant>
    <organismsDiffer>false</organismsDiffer>
    <experiments>6</experiments>
</comment>
<comment type="interaction">
    <interactant intactId="EBI-747204">
        <id>Q9UKT9</id>
    </interactant>
    <interactant intactId="EBI-8472129">
        <id>Q9HAQ2</id>
        <label>KIF9</label>
    </interactant>
    <organismsDiffer>false</organismsDiffer>
    <experiments>3</experiments>
</comment>
<comment type="interaction">
    <interactant intactId="EBI-747204">
        <id>Q9UKT9</id>
    </interactant>
    <interactant intactId="EBI-14069005">
        <id>Q9BVG8-5</id>
        <label>KIFC3</label>
    </interactant>
    <organismsDiffer>false</organismsDiffer>
    <experiments>3</experiments>
</comment>
<comment type="interaction">
    <interactant intactId="EBI-747204">
        <id>Q9UKT9</id>
    </interactant>
    <interactant intactId="EBI-6426443">
        <id>Q2WGJ6</id>
        <label>KLHL38</label>
    </interactant>
    <organismsDiffer>false</organismsDiffer>
    <experiments>3</experiments>
</comment>
<comment type="interaction">
    <interactant intactId="EBI-747204">
        <id>Q9UKT9</id>
    </interactant>
    <interactant intactId="EBI-742756">
        <id>P08727</id>
        <label>KRT19</label>
    </interactant>
    <organismsDiffer>false</organismsDiffer>
    <experiments>3</experiments>
</comment>
<comment type="interaction">
    <interactant intactId="EBI-747204">
        <id>Q9UKT9</id>
    </interactant>
    <interactant intactId="EBI-726510">
        <id>Q96BZ8</id>
        <label>LENG1</label>
    </interactant>
    <organismsDiffer>false</organismsDiffer>
    <experiments>3</experiments>
</comment>
<comment type="interaction">
    <interactant intactId="EBI-747204">
        <id>Q9UKT9</id>
    </interactant>
    <interactant intactId="EBI-10274069">
        <id>Q8TCE9</id>
        <label>LGALS14</label>
    </interactant>
    <organismsDiffer>false</organismsDiffer>
    <experiments>8</experiments>
</comment>
<comment type="interaction">
    <interactant intactId="EBI-747204">
        <id>Q9UKT9</id>
    </interactant>
    <interactant intactId="EBI-8639312">
        <id>P25800</id>
        <label>LMO1</label>
    </interactant>
    <organismsDiffer>false</organismsDiffer>
    <experiments>4</experiments>
</comment>
<comment type="interaction">
    <interactant intactId="EBI-747204">
        <id>Q9UKT9</id>
    </interactant>
    <interactant intactId="EBI-739696">
        <id>P25791</id>
        <label>LMO2</label>
    </interactant>
    <organismsDiffer>false</organismsDiffer>
    <experiments>3</experiments>
</comment>
<comment type="interaction">
    <interactant intactId="EBI-747204">
        <id>Q9UKT9</id>
    </interactant>
    <interactant intactId="EBI-11959475">
        <id>P25791-3</id>
        <label>LMO2</label>
    </interactant>
    <organismsDiffer>false</organismsDiffer>
    <experiments>3</experiments>
</comment>
<comment type="interaction">
    <interactant intactId="EBI-747204">
        <id>Q9UKT9</id>
    </interactant>
    <interactant intactId="EBI-2798728">
        <id>P61968</id>
        <label>LMO4</label>
    </interactant>
    <organismsDiffer>false</organismsDiffer>
    <experiments>3</experiments>
</comment>
<comment type="interaction">
    <interactant intactId="EBI-747204">
        <id>Q9UKT9</id>
    </interactant>
    <interactant intactId="EBI-739832">
        <id>Q8TBB1</id>
        <label>LNX1</label>
    </interactant>
    <organismsDiffer>false</organismsDiffer>
    <experiments>3</experiments>
</comment>
<comment type="interaction">
    <interactant intactId="EBI-747204">
        <id>Q9UKT9</id>
    </interactant>
    <interactant intactId="EBI-2341787">
        <id>Q17RB8</id>
        <label>LONRF1</label>
    </interactant>
    <organismsDiffer>false</organismsDiffer>
    <experiments>3</experiments>
</comment>
<comment type="interaction">
    <interactant intactId="EBI-747204">
        <id>Q9UKT9</id>
    </interactant>
    <interactant intactId="EBI-77889">
        <id>Q9UI95</id>
        <label>MAD2L2</label>
    </interactant>
    <organismsDiffer>false</organismsDiffer>
    <experiments>3</experiments>
</comment>
<comment type="interaction">
    <interactant intactId="EBI-747204">
        <id>Q9UKT9</id>
    </interactant>
    <interactant intactId="EBI-746778">
        <id>Q96A72</id>
        <label>MAGOHB</label>
    </interactant>
    <organismsDiffer>false</organismsDiffer>
    <experiments>7</experiments>
</comment>
<comment type="interaction">
    <interactant intactId="EBI-747204">
        <id>Q9UKT9</id>
    </interactant>
    <interactant intactId="EBI-348259">
        <id>Q96EZ8</id>
        <label>MCRS1</label>
    </interactant>
    <organismsDiffer>false</organismsDiffer>
    <experiments>3</experiments>
</comment>
<comment type="interaction">
    <interactant intactId="EBI-747204">
        <id>Q9UKT9</id>
    </interactant>
    <interactant intactId="EBI-14086479">
        <id>Q8IVT4</id>
        <label>MGC50722</label>
    </interactant>
    <organismsDiffer>false</organismsDiffer>
    <experiments>5</experiments>
</comment>
<comment type="interaction">
    <interactant intactId="EBI-747204">
        <id>Q9UKT9</id>
    </interactant>
    <interactant intactId="EBI-10172526">
        <id>Q9UJV3-2</id>
        <label>MID2</label>
    </interactant>
    <organismsDiffer>false</organismsDiffer>
    <experiments>5</experiments>
</comment>
<comment type="interaction">
    <interactant intactId="EBI-747204">
        <id>Q9UKT9</id>
    </interactant>
    <interactant intactId="EBI-2548751">
        <id>Q8TD10</id>
        <label>MIPOL1</label>
    </interactant>
    <organismsDiffer>false</organismsDiffer>
    <experiments>3</experiments>
</comment>
<comment type="interaction">
    <interactant intactId="EBI-747204">
        <id>Q9UKT9</id>
    </interactant>
    <interactant intactId="EBI-2555085">
        <id>Q8IVT2</id>
        <label>MISP</label>
    </interactant>
    <organismsDiffer>false</organismsDiffer>
    <experiments>5</experiments>
</comment>
<comment type="interaction">
    <interactant intactId="EBI-747204">
        <id>Q9UKT9</id>
    </interactant>
    <interactant intactId="EBI-2340269">
        <id>Q13064</id>
        <label>MKRN3</label>
    </interactant>
    <organismsDiffer>false</organismsDiffer>
    <experiments>3</experiments>
</comment>
<comment type="interaction">
    <interactant intactId="EBI-747204">
        <id>Q9UKT9</id>
    </interactant>
    <interactant intactId="EBI-9675802">
        <id>Q6PF18</id>
        <label>MORN3</label>
    </interactant>
    <organismsDiffer>false</organismsDiffer>
    <experiments>7</experiments>
</comment>
<comment type="interaction">
    <interactant intactId="EBI-747204">
        <id>Q9UKT9</id>
    </interactant>
    <interactant intactId="EBI-723426">
        <id>Q13084</id>
        <label>MRPL28</label>
    </interactant>
    <organismsDiffer>false</organismsDiffer>
    <experiments>3</experiments>
</comment>
<comment type="interaction">
    <interactant intactId="EBI-747204">
        <id>Q9UKT9</id>
    </interactant>
    <interactant intactId="EBI-2513715">
        <id>Q96EL3</id>
        <label>MRPL53</label>
    </interactant>
    <organismsDiffer>false</organismsDiffer>
    <experiments>3</experiments>
</comment>
<comment type="interaction">
    <interactant intactId="EBI-747204">
        <id>Q9UKT9</id>
    </interactant>
    <interactant intactId="EBI-7950783">
        <id>Q96JP2</id>
        <label>MYO15B</label>
    </interactant>
    <organismsDiffer>false</organismsDiffer>
    <experiments>3</experiments>
</comment>
<comment type="interaction">
    <interactant intactId="EBI-747204">
        <id>Q9UKT9</id>
    </interactant>
    <interactant intactId="EBI-8656665">
        <id>Q8N6N6</id>
        <label>NATD1</label>
    </interactant>
    <organismsDiffer>false</organismsDiffer>
    <experiments>3</experiments>
</comment>
<comment type="interaction">
    <interactant intactId="EBI-747204">
        <id>Q9UKT9</id>
    </interactant>
    <interactant intactId="EBI-740364">
        <id>Q9HC98</id>
        <label>NEK6</label>
    </interactant>
    <organismsDiffer>false</organismsDiffer>
    <experiments>5</experiments>
</comment>
<comment type="interaction">
    <interactant intactId="EBI-747204">
        <id>Q9UKT9</id>
    </interactant>
    <interactant intactId="EBI-11750983">
        <id>Q9HC98-4</id>
        <label>NEK6</label>
    </interactant>
    <organismsDiffer>false</organismsDiffer>
    <experiments>3</experiments>
</comment>
<comment type="interaction">
    <interactant intactId="EBI-747204">
        <id>Q9UKT9</id>
    </interactant>
    <interactant intactId="EBI-10271199">
        <id>Q8NI38</id>
        <label>NFKBID</label>
    </interactant>
    <organismsDiffer>false</organismsDiffer>
    <experiments>3</experiments>
</comment>
<comment type="interaction">
    <interactant intactId="EBI-747204">
        <id>Q9UKT9</id>
    </interactant>
    <interactant intactId="EBI-744782">
        <id>Q9Y5B8</id>
        <label>NME7</label>
    </interactant>
    <organismsDiffer>false</organismsDiffer>
    <experiments>3</experiments>
</comment>
<comment type="interaction">
    <interactant intactId="EBI-747204">
        <id>Q9UKT9</id>
    </interactant>
    <interactant intactId="EBI-1391623">
        <id>P29474</id>
        <label>NOS3</label>
    </interactant>
    <organismsDiffer>false</organismsDiffer>
    <experiments>3</experiments>
</comment>
<comment type="interaction">
    <interactant intactId="EBI-747204">
        <id>Q9UKT9</id>
    </interactant>
    <interactant intactId="EBI-2949792">
        <id>Q9BRJ7</id>
        <label>NUDT16L1</label>
    </interactant>
    <organismsDiffer>false</organismsDiffer>
    <experiments>3</experiments>
</comment>
<comment type="interaction">
    <interactant intactId="EBI-747204">
        <id>Q9UKT9</id>
    </interactant>
    <interactant intactId="EBI-10698339">
        <id>Q9NPJ8-3</id>
        <label>NXT2</label>
    </interactant>
    <organismsDiffer>false</organismsDiffer>
    <experiments>3</experiments>
</comment>
<comment type="interaction">
    <interactant intactId="EBI-747204">
        <id>Q9UKT9</id>
    </interactant>
    <interactant intactId="EBI-10281601">
        <id>Q9UMX2</id>
        <label>OAZ3</label>
    </interactant>
    <organismsDiffer>false</organismsDiffer>
    <experiments>3</experiments>
</comment>
<comment type="interaction">
    <interactant intactId="EBI-747204">
        <id>Q9UKT9</id>
    </interactant>
    <interactant intactId="EBI-9057006">
        <id>Q9UJX0</id>
        <label>OSGIN1</label>
    </interactant>
    <organismsDiffer>false</organismsDiffer>
    <experiments>5</experiments>
</comment>
<comment type="interaction">
    <interactant intactId="EBI-747204">
        <id>Q9UKT9</id>
    </interactant>
    <interactant intactId="EBI-1051701">
        <id>Q5JVF3</id>
        <label>PCID2</label>
    </interactant>
    <organismsDiffer>false</organismsDiffer>
    <experiments>3</experiments>
</comment>
<comment type="interaction">
    <interactant intactId="EBI-747204">
        <id>Q9UKT9</id>
    </interactant>
    <interactant intactId="EBI-10239064">
        <id>Q17RL8</id>
        <label>PDZD4</label>
    </interactant>
    <organismsDiffer>false</organismsDiffer>
    <experiments>3</experiments>
</comment>
<comment type="interaction">
    <interactant intactId="EBI-747204">
        <id>Q9UKT9</id>
    </interactant>
    <interactant intactId="EBI-357275">
        <id>Q99471</id>
        <label>PFDN5</label>
    </interactant>
    <organismsDiffer>false</organismsDiffer>
    <experiments>7</experiments>
</comment>
<comment type="interaction">
    <interactant intactId="EBI-747204">
        <id>Q9UKT9</id>
    </interactant>
    <interactant intactId="EBI-346930">
        <id>O00459</id>
        <label>PIK3R2</label>
    </interactant>
    <organismsDiffer>false</organismsDiffer>
    <experiments>4</experiments>
</comment>
<comment type="interaction">
    <interactant intactId="EBI-747204">
        <id>Q9UKT9</id>
    </interactant>
    <interactant intactId="EBI-714158">
        <id>Q13526</id>
        <label>PIN1</label>
    </interactant>
    <organismsDiffer>false</organismsDiffer>
    <experiments>8</experiments>
</comment>
<comment type="interaction">
    <interactant intactId="EBI-747204">
        <id>Q9UKT9</id>
    </interactant>
    <interactant intactId="EBI-602382">
        <id>Q16512</id>
        <label>PKN1</label>
    </interactant>
    <organismsDiffer>false</organismsDiffer>
    <experiments>3</experiments>
</comment>
<comment type="interaction">
    <interactant intactId="EBI-747204">
        <id>Q9UKT9</id>
    </interactant>
    <interactant intactId="EBI-10253863">
        <id>Q6PIY2</id>
        <label>POLM</label>
    </interactant>
    <organismsDiffer>false</organismsDiffer>
    <experiments>3</experiments>
</comment>
<comment type="interaction">
    <interactant intactId="EBI-747204">
        <id>Q9UKT9</id>
    </interactant>
    <interactant intactId="EBI-1055079">
        <id>O15160</id>
        <label>POLR1C</label>
    </interactant>
    <organismsDiffer>false</organismsDiffer>
    <experiments>9</experiments>
</comment>
<comment type="interaction">
    <interactant intactId="EBI-747204">
        <id>Q9UKT9</id>
    </interactant>
    <interactant intactId="EBI-10293968">
        <id>Q96T49</id>
        <label>PPP1R16B</label>
    </interactant>
    <organismsDiffer>false</organismsDiffer>
    <experiments>7</experiments>
</comment>
<comment type="interaction">
    <interactant intactId="EBI-747204">
        <id>Q9UKT9</id>
    </interactant>
    <interactant intactId="EBI-2557469">
        <id>Q6NYC8</id>
        <label>PPP1R18</label>
    </interactant>
    <organismsDiffer>false</organismsDiffer>
    <experiments>3</experiments>
</comment>
<comment type="interaction">
    <interactant intactId="EBI-747204">
        <id>Q9UKT9</id>
    </interactant>
    <interactant intactId="EBI-1181405">
        <id>Q13131</id>
        <label>PRKAA1</label>
    </interactant>
    <organismsDiffer>false</organismsDiffer>
    <experiments>3</experiments>
</comment>
<comment type="interaction">
    <interactant intactId="EBI-747204">
        <id>Q9UKT9</id>
    </interactant>
    <interactant intactId="EBI-1383852">
        <id>P54646</id>
        <label>PRKAA2</label>
    </interactant>
    <organismsDiffer>false</organismsDiffer>
    <experiments>3</experiments>
</comment>
<comment type="interaction">
    <interactant intactId="EBI-747204">
        <id>Q9UKT9</id>
    </interactant>
    <interactant intactId="EBI-1053424">
        <id>O43741</id>
        <label>PRKAB2</label>
    </interactant>
    <organismsDiffer>false</organismsDiffer>
    <experiments>11</experiments>
</comment>
<comment type="interaction">
    <interactant intactId="EBI-747204">
        <id>Q9UKT9</id>
    </interactant>
    <interactant intactId="EBI-2798416">
        <id>Q99633</id>
        <label>PRPF18</label>
    </interactant>
    <organismsDiffer>false</organismsDiffer>
    <experiments>3</experiments>
</comment>
<comment type="interaction">
    <interactant intactId="EBI-747204">
        <id>Q9UKT9</id>
    </interactant>
    <interactant intactId="EBI-359352">
        <id>P25786</id>
        <label>PSMA1</label>
    </interactant>
    <organismsDiffer>false</organismsDiffer>
    <experiments>3</experiments>
</comment>
<comment type="interaction">
    <interactant intactId="EBI-747204">
        <id>Q9UKT9</id>
    </interactant>
    <interactant intactId="EBI-1383632">
        <id>Q13882</id>
        <label>PTK6</label>
    </interactant>
    <organismsDiffer>false</organismsDiffer>
    <experiments>3</experiments>
</comment>
<comment type="interaction">
    <interactant intactId="EBI-747204">
        <id>Q9UKT9</id>
    </interactant>
    <interactant intactId="EBI-1055693">
        <id>O75771</id>
        <label>RAD51D</label>
    </interactant>
    <organismsDiffer>false</organismsDiffer>
    <experiments>11</experiments>
</comment>
<comment type="interaction">
    <interactant intactId="EBI-747204">
        <id>Q9UKT9</id>
    </interactant>
    <interactant intactId="EBI-743428">
        <id>Q9P2K3</id>
        <label>RCOR3</label>
    </interactant>
    <organismsDiffer>false</organismsDiffer>
    <experiments>4</experiments>
</comment>
<comment type="interaction">
    <interactant intactId="EBI-747204">
        <id>Q9UKT9</id>
    </interactant>
    <interactant intactId="EBI-446668">
        <id>P61586</id>
        <label>RHOA</label>
    </interactant>
    <organismsDiffer>false</organismsDiffer>
    <experiments>3</experiments>
</comment>
<comment type="interaction">
    <interactant intactId="EBI-747204">
        <id>Q9UKT9</id>
    </interactant>
    <interactant intactId="EBI-16428950">
        <id>A0A0S2Z4G9</id>
        <label>RNF6</label>
    </interactant>
    <organismsDiffer>false</organismsDiffer>
    <experiments>3</experiments>
</comment>
<comment type="interaction">
    <interactant intactId="EBI-747204">
        <id>Q9UKT9</id>
    </interactant>
    <interactant intactId="EBI-748391">
        <id>Q9BWG6</id>
        <label>SCNM1</label>
    </interactant>
    <organismsDiffer>false</organismsDiffer>
    <experiments>3</experiments>
</comment>
<comment type="interaction">
    <interactant intactId="EBI-747204">
        <id>Q9UKT9</id>
    </interactant>
    <interactant intactId="EBI-358489">
        <id>Q96GM5</id>
        <label>SMARCD1</label>
    </interactant>
    <organismsDiffer>false</organismsDiffer>
    <experiments>3</experiments>
</comment>
<comment type="interaction">
    <interactant intactId="EBI-747204">
        <id>Q9UKT9</id>
    </interactant>
    <interactant intactId="EBI-742688">
        <id>Q9NZD8</id>
        <label>SPG21</label>
    </interactant>
    <organismsDiffer>false</organismsDiffer>
    <experiments>6</experiments>
</comment>
<comment type="interaction">
    <interactant intactId="EBI-747204">
        <id>Q9UKT9</id>
    </interactant>
    <interactant intactId="EBI-745021">
        <id>Q96FJ0</id>
        <label>STAMBPL1</label>
    </interactant>
    <organismsDiffer>false</organismsDiffer>
    <experiments>3</experiments>
</comment>
<comment type="interaction">
    <interactant intactId="EBI-747204">
        <id>Q9UKT9</id>
    </interactant>
    <interactant intactId="EBI-749295">
        <id>O75716</id>
        <label>STK16</label>
    </interactant>
    <organismsDiffer>false</organismsDiffer>
    <experiments>3</experiments>
</comment>
<comment type="interaction">
    <interactant intactId="EBI-747204">
        <id>Q9UKT9</id>
    </interactant>
    <interactant intactId="EBI-714135">
        <id>O75558</id>
        <label>STX11</label>
    </interactant>
    <organismsDiffer>false</organismsDiffer>
    <experiments>3</experiments>
</comment>
<comment type="interaction">
    <interactant intactId="EBI-747204">
        <id>Q9UKT9</id>
    </interactant>
    <interactant intactId="EBI-8787464">
        <id>Q9NU19</id>
        <label>TBC1D22B</label>
    </interactant>
    <organismsDiffer>false</organismsDiffer>
    <experiments>9</experiments>
</comment>
<comment type="interaction">
    <interactant intactId="EBI-747204">
        <id>Q9UKT9</id>
    </interactant>
    <interactant intactId="EBI-750484">
        <id>Q9Y4C2</id>
        <label>TCAF1</label>
    </interactant>
    <organismsDiffer>false</organismsDiffer>
    <experiments>5</experiments>
</comment>
<comment type="interaction">
    <interactant intactId="EBI-747204">
        <id>Q9UKT9</id>
    </interactant>
    <interactant intactId="EBI-11974855">
        <id>Q9Y4C2-2</id>
        <label>TCAF1</label>
    </interactant>
    <organismsDiffer>false</organismsDiffer>
    <experiments>3</experiments>
</comment>
<comment type="interaction">
    <interactant intactId="EBI-747204">
        <id>Q9UKT9</id>
    </interactant>
    <interactant intactId="EBI-954089">
        <id>O15273</id>
        <label>TCAP</label>
    </interactant>
    <organismsDiffer>false</organismsDiffer>
    <experiments>3</experiments>
</comment>
<comment type="interaction">
    <interactant intactId="EBI-747204">
        <id>Q9UKT9</id>
    </interactant>
    <interactant intactId="EBI-11955057">
        <id>Q8N8B7-2</id>
        <label>TCEANC</label>
    </interactant>
    <organismsDiffer>false</organismsDiffer>
    <experiments>3</experiments>
</comment>
<comment type="interaction">
    <interactant intactId="EBI-747204">
        <id>Q9UKT9</id>
    </interactant>
    <interactant intactId="EBI-740781">
        <id>Q9BT92</id>
        <label>TCHP</label>
    </interactant>
    <organismsDiffer>false</organismsDiffer>
    <experiments>3</experiments>
</comment>
<comment type="interaction">
    <interactant intactId="EBI-747204">
        <id>Q9UKT9</id>
    </interactant>
    <interactant intactId="EBI-8644516">
        <id>Q9BXF9</id>
        <label>TEKT3</label>
    </interactant>
    <organismsDiffer>false</organismsDiffer>
    <experiments>3</experiments>
</comment>
<comment type="interaction">
    <interactant intactId="EBI-747204">
        <id>Q9UKT9</id>
    </interactant>
    <interactant intactId="EBI-750487">
        <id>Q8WW24</id>
        <label>TEKT4</label>
    </interactant>
    <organismsDiffer>false</organismsDiffer>
    <experiments>7</experiments>
</comment>
<comment type="interaction">
    <interactant intactId="EBI-747204">
        <id>Q9UKT9</id>
    </interactant>
    <interactant intactId="EBI-11952651">
        <id>Q7Z6R9</id>
        <label>TFAP2D</label>
    </interactant>
    <organismsDiffer>false</organismsDiffer>
    <experiments>3</experiments>
</comment>
<comment type="interaction">
    <interactant intactId="EBI-747204">
        <id>Q9UKT9</id>
    </interactant>
    <interactant intactId="EBI-717810">
        <id>Q08117</id>
        <label>TLE5</label>
    </interactant>
    <organismsDiffer>false</organismsDiffer>
    <experiments>3</experiments>
</comment>
<comment type="interaction">
    <interactant intactId="EBI-747204">
        <id>Q9UKT9</id>
    </interactant>
    <interactant intactId="EBI-11741437">
        <id>Q08117-2</id>
        <label>TLE5</label>
    </interactant>
    <organismsDiffer>false</organismsDiffer>
    <experiments>5</experiments>
</comment>
<comment type="interaction">
    <interactant intactId="EBI-747204">
        <id>Q9UKT9</id>
    </interactant>
    <interactant intactId="EBI-743573">
        <id>O75865</id>
        <label>TRAPPC6A</label>
    </interactant>
    <organismsDiffer>false</organismsDiffer>
    <experiments>3</experiments>
</comment>
<comment type="interaction">
    <interactant intactId="EBI-747204">
        <id>Q9UKT9</id>
    </interactant>
    <interactant intactId="EBI-8451480">
        <id>O75865-2</id>
        <label>TRAPPC6A</label>
    </interactant>
    <organismsDiffer>false</organismsDiffer>
    <experiments>5</experiments>
</comment>
<comment type="interaction">
    <interactant intactId="EBI-747204">
        <id>Q9UKT9</id>
    </interactant>
    <interactant intactId="EBI-5235829">
        <id>Q8IWZ5</id>
        <label>TRIM42</label>
    </interactant>
    <organismsDiffer>false</organismsDiffer>
    <experiments>3</experiments>
</comment>
<comment type="interaction">
    <interactant intactId="EBI-747204">
        <id>Q9UKT9</id>
    </interactant>
    <interactant intactId="EBI-372432">
        <id>Q8WW01</id>
        <label>TSEN15</label>
    </interactant>
    <organismsDiffer>false</organismsDiffer>
    <experiments>3</experiments>
</comment>
<comment type="interaction">
    <interactant intactId="EBI-747204">
        <id>Q9UKT9</id>
    </interactant>
    <interactant intactId="EBI-10241197">
        <id>Q3SY00</id>
        <label>TSGA10IP</label>
    </interactant>
    <organismsDiffer>false</organismsDiffer>
    <experiments>3</experiments>
</comment>
<comment type="interaction">
    <interactant intactId="EBI-747204">
        <id>Q9UKT9</id>
    </interactant>
    <interactant intactId="EBI-3918381">
        <id>Q96PN8</id>
        <label>TSSK3</label>
    </interactant>
    <organismsDiffer>false</organismsDiffer>
    <experiments>8</experiments>
</comment>
<comment type="interaction">
    <interactant intactId="EBI-747204">
        <id>Q9UKT9</id>
    </interactant>
    <interactant intactId="EBI-8994397">
        <id>Q5T7W7</id>
        <label>TSTD2</label>
    </interactant>
    <organismsDiffer>false</organismsDiffer>
    <experiments>10</experiments>
</comment>
<comment type="interaction">
    <interactant intactId="EBI-747204">
        <id>Q9UKT9</id>
    </interactant>
    <interactant intactId="EBI-743272">
        <id>O75604</id>
        <label>USP2</label>
    </interactant>
    <organismsDiffer>false</organismsDiffer>
    <experiments>3</experiments>
</comment>
<comment type="interaction">
    <interactant intactId="EBI-747204">
        <id>Q9UKT9</id>
    </interactant>
    <interactant intactId="EBI-357430">
        <id>P61758</id>
        <label>VBP1</label>
    </interactant>
    <organismsDiffer>false</organismsDiffer>
    <experiments>3</experiments>
</comment>
<comment type="interaction">
    <interactant intactId="EBI-747204">
        <id>Q9UKT9</id>
    </interactant>
    <interactant intactId="EBI-515331">
        <id>P07947</id>
        <label>YES1</label>
    </interactant>
    <organismsDiffer>false</organismsDiffer>
    <experiments>5</experiments>
</comment>
<comment type="interaction">
    <interactant intactId="EBI-747204">
        <id>Q9UKT9</id>
    </interactant>
    <interactant intactId="EBI-16428984">
        <id>A0A0S2Z6H0</id>
        <label>ZGPAT</label>
    </interactant>
    <organismsDiffer>false</organismsDiffer>
    <experiments>3</experiments>
</comment>
<comment type="interaction">
    <interactant intactId="EBI-747204">
        <id>Q9UKT9</id>
    </interactant>
    <interactant intactId="EBI-3439227">
        <id>Q8N5A5</id>
        <label>ZGPAT</label>
    </interactant>
    <organismsDiffer>false</organismsDiffer>
    <experiments>3</experiments>
</comment>
<comment type="interaction">
    <interactant intactId="EBI-747204">
        <id>Q9UKT9</id>
    </interactant>
    <interactant intactId="EBI-10183064">
        <id>Q8N5A5-2</id>
        <label>ZGPAT</label>
    </interactant>
    <organismsDiffer>false</organismsDiffer>
    <experiments>3</experiments>
</comment>
<comment type="interaction">
    <interactant intactId="EBI-747204">
        <id>Q9UKT9</id>
    </interactant>
    <interactant intactId="EBI-2797576">
        <id>Q9UBW7</id>
        <label>ZMYM2</label>
    </interactant>
    <organismsDiffer>false</organismsDiffer>
    <experiments>3</experiments>
</comment>
<comment type="interaction">
    <interactant intactId="EBI-747204">
        <id>Q9UKT9</id>
    </interactant>
    <interactant intactId="EBI-740727">
        <id>Q8TAU3</id>
        <label>ZNF417</label>
    </interactant>
    <organismsDiffer>false</organismsDiffer>
    <experiments>3</experiments>
</comment>
<comment type="interaction">
    <interactant intactId="EBI-747204">
        <id>Q9UKT9</id>
    </interactant>
    <interactant intactId="EBI-6427977">
        <id>Q96SQ5</id>
        <label>ZNF587</label>
    </interactant>
    <organismsDiffer>false</organismsDiffer>
    <experiments>3</experiments>
</comment>
<comment type="interaction">
    <interactant intactId="EBI-747204">
        <id>Q9UKT9</id>
    </interactant>
    <interactant intactId="EBI-7254550">
        <id>P36508</id>
        <label>ZNF76</label>
    </interactant>
    <organismsDiffer>false</organismsDiffer>
    <experiments>3</experiments>
</comment>
<comment type="interaction">
    <interactant intactId="EBI-747204">
        <id>Q9UKT9</id>
    </interactant>
    <interactant intactId="EBI-25492395">
        <id>PRO_0000449633</id>
        <label>rep</label>
        <dbReference type="UniProtKB" id="P0DTD1"/>
    </interactant>
    <organismsDiffer>true</organismsDiffer>
    <experiments>3</experiments>
</comment>
<comment type="subcellular location">
    <subcellularLocation>
        <location evidence="4">Nucleus</location>
    </subcellularLocation>
    <subcellularLocation>
        <location evidence="4">Cytoplasm</location>
    </subcellularLocation>
</comment>
<comment type="subcellular location">
    <molecule>Isoform 1</molecule>
    <subcellularLocation>
        <location evidence="7 10">Nucleus</location>
    </subcellularLocation>
</comment>
<comment type="subcellular location">
    <molecule>Isoform 3</molecule>
    <subcellularLocation>
        <location evidence="7">Nucleus</location>
    </subcellularLocation>
</comment>
<comment type="subcellular location">
    <molecule>Isoform 11</molecule>
    <subcellularLocation>
        <location evidence="7">Nucleus</location>
    </subcellularLocation>
</comment>
<comment type="subcellular location">
    <molecule>Isoform 14</molecule>
    <subcellularLocation>
        <location evidence="7">Nucleus</location>
    </subcellularLocation>
    <subcellularLocation>
        <location evidence="7">Cytoplasm</location>
    </subcellularLocation>
</comment>
<comment type="subcellular location">
    <molecule>Isoform 12</molecule>
    <subcellularLocation>
        <location evidence="7">Cytoplasm</location>
    </subcellularLocation>
</comment>
<comment type="alternative products">
    <event type="alternative splicing"/>
    <isoform>
        <id>Q9UKT9-1</id>
        <name>1</name>
        <name>Aio-1</name>
        <sequence type="displayed"/>
    </isoform>
    <isoform>
        <id>Q9UKT9-2</id>
        <name>2</name>
        <name>Aio-del4</name>
        <sequence type="described" ref="VSP_006840"/>
    </isoform>
    <isoform>
        <id>Q9UKT9-3</id>
        <name>3</name>
        <name>Aio-del5</name>
        <sequence type="described" ref="VSP_006842"/>
    </isoform>
    <isoform>
        <id>Q9UKT9-4</id>
        <name>4</name>
        <name>Aio-del6</name>
        <sequence type="described" ref="VSP_006844"/>
    </isoform>
    <isoform>
        <id>Q9UKT9-5</id>
        <name>5</name>
        <name>Aio-del4,5</name>
        <sequence type="described" ref="VSP_006841"/>
    </isoform>
    <isoform>
        <id>Q9UKT9-6</id>
        <name>6</name>
        <name>Aio-del5,6</name>
        <sequence type="described" ref="VSP_006843"/>
    </isoform>
    <isoform>
        <id>Q9UKT9-7</id>
        <name>7</name>
        <name>Aio-del2</name>
        <sequence type="described" ref="VSP_041274"/>
    </isoform>
    <isoform>
        <id>Q9UKT9-8</id>
        <name>8</name>
        <name>Aio-del2,5</name>
        <sequence type="described" ref="VSP_041274 VSP_006842"/>
    </isoform>
    <isoform>
        <id>Q9UKT9-9</id>
        <name>9</name>
        <name>Aio-del3</name>
        <sequence type="described" ref="VSP_041278"/>
    </isoform>
    <isoform>
        <id>Q9UKT9-10</id>
        <name>10</name>
        <name>Aio-del3,4</name>
        <sequence type="described" ref="VSP_041277"/>
    </isoform>
    <isoform>
        <id>Q9UKT9-11</id>
        <name>11</name>
        <name>Aio-del3,4,5</name>
        <sequence type="described" ref="VSP_041276"/>
    </isoform>
    <isoform>
        <id>Q9UKT9-12</id>
        <name>12</name>
        <name>Aio-del3,4,5,6</name>
        <sequence type="described" ref="VSP_041275"/>
    </isoform>
    <isoform>
        <id>Q9UKT9-13</id>
        <name>13</name>
        <name>Aio-del4,5,6</name>
        <sequence type="described" ref="VSP_041279"/>
    </isoform>
    <isoform>
        <id>Q9UKT9-14</id>
        <name>14</name>
        <name>Aio-1-5a</name>
        <sequence type="described" ref="VSP_041280 VSP_041281"/>
    </isoform>
    <isoform>
        <id>Q9UKT9-15</id>
        <name>15</name>
        <name>Aio-del4-5a</name>
        <sequence type="described" ref="VSP_006840 VSP_041280"/>
    </isoform>
    <isoform>
        <id>Q9UKT9-16</id>
        <name>16</name>
        <sequence type="described" ref="VSP_055353"/>
    </isoform>
</comment>
<comment type="tissue specificity">
    <text evidence="7">Expressed most strongly in peripheral blood leukocytes, the spleen, and the thymus.</text>
</comment>
<comment type="induction">
    <text evidence="8">Up-regulated by TGFB1 and 2,3,7,8-tetrachlorodibenzo-p-dioxin (TCDD) in activated AHR T-cells.</text>
</comment>
<comment type="domain">
    <text evidence="10">C2H2-type 5 and C2H2-type 6 mediate homodimerization and heterodimerization.</text>
</comment>
<comment type="PTM">
    <text evidence="4 6">Phosphorylation on tyrosine residues induced by IL2 is required for dissociation from HRAS and nuclear translocation of IKZF3 in T-cells. Phosphorylation on tyrosine residues induced by IL4 is required for dissociation from Bcl-X(L) in T-cells.</text>
</comment>
<comment type="disease" evidence="10">
    <disease id="DI-06169">
        <name>Immunodeficiency 84</name>
        <acronym>IMD84</acronym>
        <description>An autosomal recessive immunologic disorder characterized by recurrent sinopulmonary infections from childhood associated with low levels of B cells and impaired early B-cell development. There may also be variable T-cell abnormalities. Patients have increased susceptibility to infection with Epstein-Barr virus and a propensity for the development of lymphoma in adulthood.</description>
        <dbReference type="MIM" id="619437"/>
    </disease>
    <text>The disease is caused by variants affecting the gene represented in this entry.</text>
</comment>
<comment type="similarity">
    <text evidence="14">Belongs to the Ikaros C2H2-type zinc-finger protein family.</text>
</comment>
<keyword id="KW-0025">Alternative splicing</keyword>
<keyword id="KW-0075">B-cell activation</keyword>
<keyword id="KW-0963">Cytoplasm</keyword>
<keyword id="KW-0225">Disease variant</keyword>
<keyword id="KW-0238">DNA-binding</keyword>
<keyword id="KW-1017">Isopeptide bond</keyword>
<keyword id="KW-0479">Metal-binding</keyword>
<keyword id="KW-0539">Nucleus</keyword>
<keyword id="KW-0597">Phosphoprotein</keyword>
<keyword id="KW-1267">Proteomics identification</keyword>
<keyword id="KW-1185">Reference proteome</keyword>
<keyword id="KW-0677">Repeat</keyword>
<keyword id="KW-0804">Transcription</keyword>
<keyword id="KW-0805">Transcription regulation</keyword>
<keyword id="KW-0832">Ubl conjugation</keyword>
<keyword id="KW-0862">Zinc</keyword>
<keyword id="KW-0863">Zinc-finger</keyword>
<sequence>MEDIQTNAELKSTQEQSVPAESAAVLNDYSLTKSHEMENVDSGEGPANEDEDIGDDSMKVKDEYSERDENVLKSEPMGNAEEPEIPYSYSREYNEYENIKLERHVVSFDSSRPTSGKMNCDVCGLSCISFNVLMVHKRSHTGERPFQCNQCGASFTQKGNLLRHIKLHTGEKPFKCHLCNYACQRRDALTGHLRTHSVEKPYKCEFCGRSYKQRSSLEEHKERCRTFLQSTDPGDTASAEARHIKAEMGSERALVLDRLASNVAKRKSSMPQKFIGEKRHCFDVNYNSSYMYEKESELIQTRMMDQAINNAISYLGAEALRPLVQTPPAPTSEMVPVISSMYPIALTRAEMSNGAPQELEKKSIHLPEKSVPSERGLSPNNSGHDSTDTDSNHEERQNHIYQQNHMVLSRARNGMPLLKEVPRSYELLKPPPICPRDSVKVINKEGEVMDVYRCDHCRVLFLDYVMFTIHMGCHGFRDPFECNMCGYRSHDRYEFSSHIARGEHRALLK</sequence>
<protein>
    <recommendedName>
        <fullName>Zinc finger protein Aiolos</fullName>
    </recommendedName>
    <alternativeName>
        <fullName>Ikaros family zinc finger protein 3</fullName>
    </alternativeName>
</protein>
<proteinExistence type="evidence at protein level"/>
<dbReference type="EMBL" id="AF129512">
    <property type="protein sequence ID" value="AAF13493.1"/>
    <property type="molecule type" value="mRNA"/>
</dbReference>
<dbReference type="EMBL" id="AJ292565">
    <property type="protein sequence ID" value="CAC80427.1"/>
    <property type="molecule type" value="mRNA"/>
</dbReference>
<dbReference type="EMBL" id="AJ292566">
    <property type="protein sequence ID" value="CAC80428.1"/>
    <property type="molecule type" value="mRNA"/>
</dbReference>
<dbReference type="EMBL" id="AJ292567">
    <property type="protein sequence ID" value="CAC80429.1"/>
    <property type="molecule type" value="mRNA"/>
</dbReference>
<dbReference type="EMBL" id="AJ292568">
    <property type="protein sequence ID" value="CAC80430.1"/>
    <property type="molecule type" value="mRNA"/>
</dbReference>
<dbReference type="EMBL" id="AJ292569">
    <property type="protein sequence ID" value="CAC80431.1"/>
    <property type="molecule type" value="mRNA"/>
</dbReference>
<dbReference type="EMBL" id="AY377973">
    <property type="protein sequence ID" value="AAR84584.1"/>
    <property type="molecule type" value="mRNA"/>
</dbReference>
<dbReference type="EMBL" id="AY377975">
    <property type="protein sequence ID" value="AAR84586.1"/>
    <property type="molecule type" value="mRNA"/>
</dbReference>
<dbReference type="EMBL" id="AY377976">
    <property type="protein sequence ID" value="AAR84587.1"/>
    <property type="molecule type" value="mRNA"/>
</dbReference>
<dbReference type="EMBL" id="AY377977">
    <property type="protein sequence ID" value="AAR84588.1"/>
    <property type="molecule type" value="mRNA"/>
</dbReference>
<dbReference type="EMBL" id="AY377978">
    <property type="protein sequence ID" value="AAR84589.1"/>
    <property type="molecule type" value="mRNA"/>
</dbReference>
<dbReference type="EMBL" id="AY377979">
    <property type="protein sequence ID" value="AAR84590.1"/>
    <property type="molecule type" value="mRNA"/>
</dbReference>
<dbReference type="EMBL" id="AY377980">
    <property type="protein sequence ID" value="AAR84591.1"/>
    <property type="molecule type" value="mRNA"/>
</dbReference>
<dbReference type="EMBL" id="AY377981">
    <property type="protein sequence ID" value="AAR84592.1"/>
    <property type="molecule type" value="mRNA"/>
</dbReference>
<dbReference type="EMBL" id="AY377982">
    <property type="protein sequence ID" value="AAR84593.1"/>
    <property type="molecule type" value="mRNA"/>
</dbReference>
<dbReference type="EMBL" id="AK301250">
    <property type="protein sequence ID" value="BAG62817.1"/>
    <property type="molecule type" value="mRNA"/>
</dbReference>
<dbReference type="EMBL" id="AK303495">
    <property type="protein sequence ID" value="BAG64529.1"/>
    <property type="molecule type" value="mRNA"/>
</dbReference>
<dbReference type="EMBL" id="AC079199">
    <property type="status" value="NOT_ANNOTATED_CDS"/>
    <property type="molecule type" value="Genomic_DNA"/>
</dbReference>
<dbReference type="EMBL" id="AC090844">
    <property type="status" value="NOT_ANNOTATED_CDS"/>
    <property type="molecule type" value="Genomic_DNA"/>
</dbReference>
<dbReference type="EMBL" id="CH471152">
    <property type="protein sequence ID" value="EAW60606.1"/>
    <property type="molecule type" value="Genomic_DNA"/>
</dbReference>
<dbReference type="EMBL" id="BC032707">
    <property type="protein sequence ID" value="AAH32707.1"/>
    <property type="molecule type" value="mRNA"/>
</dbReference>
<dbReference type="CCDS" id="CCDS11346.1">
    <molecule id="Q9UKT9-1"/>
</dbReference>
<dbReference type="CCDS" id="CCDS11347.1">
    <molecule id="Q9UKT9-2"/>
</dbReference>
<dbReference type="CCDS" id="CCDS11348.1">
    <molecule id="Q9UKT9-3"/>
</dbReference>
<dbReference type="CCDS" id="CCDS11349.1">
    <molecule id="Q9UKT9-4"/>
</dbReference>
<dbReference type="CCDS" id="CCDS11350.1">
    <molecule id="Q9UKT9-5"/>
</dbReference>
<dbReference type="CCDS" id="CCDS11351.1">
    <molecule id="Q9UKT9-6"/>
</dbReference>
<dbReference type="CCDS" id="CCDS58539.1">
    <molecule id="Q9UKT9-8"/>
</dbReference>
<dbReference type="CCDS" id="CCDS58540.1">
    <molecule id="Q9UKT9-7"/>
</dbReference>
<dbReference type="CCDS" id="CCDS58541.1">
    <molecule id="Q9UKT9-12"/>
</dbReference>
<dbReference type="CCDS" id="CCDS58542.1">
    <molecule id="Q9UKT9-11"/>
</dbReference>
<dbReference type="CCDS" id="CCDS58543.1">
    <molecule id="Q9UKT9-10"/>
</dbReference>
<dbReference type="CCDS" id="CCDS58544.1">
    <molecule id="Q9UKT9-9"/>
</dbReference>
<dbReference type="CCDS" id="CCDS58545.1">
    <molecule id="Q9UKT9-13"/>
</dbReference>
<dbReference type="CCDS" id="CCDS74055.1">
    <molecule id="Q9UKT9-16"/>
</dbReference>
<dbReference type="RefSeq" id="NP_001244337.1">
    <molecule id="Q9UKT9-7"/>
    <property type="nucleotide sequence ID" value="NM_001257408.2"/>
</dbReference>
<dbReference type="RefSeq" id="NP_001244338.1">
    <molecule id="Q9UKT9-8"/>
    <property type="nucleotide sequence ID" value="NM_001257409.2"/>
</dbReference>
<dbReference type="RefSeq" id="NP_001244339.1">
    <molecule id="Q9UKT9-9"/>
    <property type="nucleotide sequence ID" value="NM_001257410.2"/>
</dbReference>
<dbReference type="RefSeq" id="NP_001244340.1">
    <molecule id="Q9UKT9-10"/>
    <property type="nucleotide sequence ID" value="NM_001257411.2"/>
</dbReference>
<dbReference type="RefSeq" id="NP_001244341.1">
    <molecule id="Q9UKT9-11"/>
    <property type="nucleotide sequence ID" value="NM_001257412.2"/>
</dbReference>
<dbReference type="RefSeq" id="NP_001244342.1">
    <molecule id="Q9UKT9-12"/>
    <property type="nucleotide sequence ID" value="NM_001257413.2"/>
</dbReference>
<dbReference type="RefSeq" id="NP_001244343.1">
    <molecule id="Q9UKT9-13"/>
    <property type="nucleotide sequence ID" value="NM_001257414.2"/>
</dbReference>
<dbReference type="RefSeq" id="NP_001271443.1">
    <molecule id="Q9UKT9-16"/>
    <property type="nucleotide sequence ID" value="NM_001284514.2"/>
</dbReference>
<dbReference type="RefSeq" id="NP_001271444.1">
    <molecule id="Q9UKT9-16"/>
    <property type="nucleotide sequence ID" value="NM_001284515.2"/>
</dbReference>
<dbReference type="RefSeq" id="NP_001271445.1">
    <molecule id="Q9UKT9-16"/>
    <property type="nucleotide sequence ID" value="NM_001284516.1"/>
</dbReference>
<dbReference type="RefSeq" id="NP_036613.2">
    <molecule id="Q9UKT9-1"/>
    <property type="nucleotide sequence ID" value="NM_012481.4"/>
</dbReference>
<dbReference type="RefSeq" id="NP_899051.1">
    <molecule id="Q9UKT9-2"/>
    <property type="nucleotide sequence ID" value="NM_183228.3"/>
</dbReference>
<dbReference type="RefSeq" id="NP_899052.1">
    <molecule id="Q9UKT9-3"/>
    <property type="nucleotide sequence ID" value="NM_183229.3"/>
</dbReference>
<dbReference type="RefSeq" id="NP_899053.1">
    <molecule id="Q9UKT9-4"/>
    <property type="nucleotide sequence ID" value="NM_183230.3"/>
</dbReference>
<dbReference type="RefSeq" id="NP_899054.1">
    <molecule id="Q9UKT9-5"/>
    <property type="nucleotide sequence ID" value="NM_183231.3"/>
</dbReference>
<dbReference type="RefSeq" id="NP_899055.1">
    <molecule id="Q9UKT9-6"/>
    <property type="nucleotide sequence ID" value="NM_183232.3"/>
</dbReference>
<dbReference type="SMR" id="Q9UKT9"/>
<dbReference type="BioGRID" id="116484">
    <property type="interactions" value="316"/>
</dbReference>
<dbReference type="DIP" id="DIP-56975N"/>
<dbReference type="FunCoup" id="Q9UKT9">
    <property type="interactions" value="1814"/>
</dbReference>
<dbReference type="IntAct" id="Q9UKT9">
    <property type="interactions" value="184"/>
</dbReference>
<dbReference type="MINT" id="Q9UKT9"/>
<dbReference type="STRING" id="9606.ENSP00000344544"/>
<dbReference type="BindingDB" id="Q9UKT9"/>
<dbReference type="ChEMBL" id="CHEMBL4739707"/>
<dbReference type="GlyGen" id="Q9UKT9">
    <property type="glycosylation" value="2 sites, 1 O-linked glycan (1 site)"/>
</dbReference>
<dbReference type="iPTMnet" id="Q9UKT9"/>
<dbReference type="PhosphoSitePlus" id="Q9UKT9"/>
<dbReference type="BioMuta" id="IKZF3"/>
<dbReference type="DMDM" id="212276437"/>
<dbReference type="jPOST" id="Q9UKT9"/>
<dbReference type="MassIVE" id="Q9UKT9"/>
<dbReference type="PaxDb" id="9606-ENSP00000344544"/>
<dbReference type="PeptideAtlas" id="Q9UKT9"/>
<dbReference type="ProteomicsDB" id="84855">
    <molecule id="Q9UKT9-1"/>
</dbReference>
<dbReference type="ProteomicsDB" id="84856">
    <molecule id="Q9UKT9-10"/>
</dbReference>
<dbReference type="ProteomicsDB" id="84857">
    <molecule id="Q9UKT9-11"/>
</dbReference>
<dbReference type="ProteomicsDB" id="84858">
    <molecule id="Q9UKT9-12"/>
</dbReference>
<dbReference type="ProteomicsDB" id="84859">
    <molecule id="Q9UKT9-13"/>
</dbReference>
<dbReference type="ProteomicsDB" id="84860">
    <molecule id="Q9UKT9-14"/>
</dbReference>
<dbReference type="ProteomicsDB" id="84861">
    <molecule id="Q9UKT9-15"/>
</dbReference>
<dbReference type="ProteomicsDB" id="84862">
    <molecule id="Q9UKT9-2"/>
</dbReference>
<dbReference type="ProteomicsDB" id="84863">
    <molecule id="Q9UKT9-3"/>
</dbReference>
<dbReference type="ProteomicsDB" id="84864">
    <molecule id="Q9UKT9-4"/>
</dbReference>
<dbReference type="ProteomicsDB" id="84865">
    <molecule id="Q9UKT9-5"/>
</dbReference>
<dbReference type="ProteomicsDB" id="84866">
    <molecule id="Q9UKT9-6"/>
</dbReference>
<dbReference type="ProteomicsDB" id="84867">
    <molecule id="Q9UKT9-7"/>
</dbReference>
<dbReference type="ProteomicsDB" id="84868">
    <molecule id="Q9UKT9-8"/>
</dbReference>
<dbReference type="ProteomicsDB" id="84869">
    <molecule id="Q9UKT9-9"/>
</dbReference>
<dbReference type="Antibodypedia" id="4475">
    <property type="antibodies" value="517 antibodies from 40 providers"/>
</dbReference>
<dbReference type="DNASU" id="22806"/>
<dbReference type="Ensembl" id="ENST00000293068.9">
    <molecule id="Q9UKT9-14"/>
    <property type="protein sequence ID" value="ENSP00000462791.1"/>
    <property type="gene ID" value="ENSG00000161405.18"/>
</dbReference>
<dbReference type="Ensembl" id="ENST00000346243.7">
    <molecule id="Q9UKT9-6"/>
    <property type="protein sequence ID" value="ENSP00000341977.3"/>
    <property type="gene ID" value="ENSG00000161405.18"/>
</dbReference>
<dbReference type="Ensembl" id="ENST00000346872.8">
    <molecule id="Q9UKT9-1"/>
    <property type="protein sequence ID" value="ENSP00000344544.3"/>
    <property type="gene ID" value="ENSG00000161405.18"/>
</dbReference>
<dbReference type="Ensembl" id="ENST00000350532.7">
    <molecule id="Q9UKT9-4"/>
    <property type="protein sequence ID" value="ENSP00000344471.3"/>
    <property type="gene ID" value="ENSG00000161405.18"/>
</dbReference>
<dbReference type="Ensembl" id="ENST00000351680.7">
    <molecule id="Q9UKT9-3"/>
    <property type="protein sequence ID" value="ENSP00000345622.3"/>
    <property type="gene ID" value="ENSG00000161405.18"/>
</dbReference>
<dbReference type="Ensembl" id="ENST00000377944.7">
    <molecule id="Q9UKT9-10"/>
    <property type="protein sequence ID" value="ENSP00000367179.3"/>
    <property type="gene ID" value="ENSG00000161405.18"/>
</dbReference>
<dbReference type="Ensembl" id="ENST00000377945.7">
    <molecule id="Q9UKT9-13"/>
    <property type="protein sequence ID" value="ENSP00000367180.3"/>
    <property type="gene ID" value="ENSG00000161405.18"/>
</dbReference>
<dbReference type="Ensembl" id="ENST00000377952.6">
    <molecule id="Q9UKT9-12"/>
    <property type="protein sequence ID" value="ENSP00000367188.2"/>
    <property type="gene ID" value="ENSG00000161405.18"/>
</dbReference>
<dbReference type="Ensembl" id="ENST00000377958.7">
    <molecule id="Q9UKT9-9"/>
    <property type="protein sequence ID" value="ENSP00000367194.2"/>
    <property type="gene ID" value="ENSG00000161405.18"/>
</dbReference>
<dbReference type="Ensembl" id="ENST00000394189.6">
    <molecule id="Q9UKT9-11"/>
    <property type="protein sequence ID" value="ENSP00000377741.2"/>
    <property type="gene ID" value="ENSG00000161405.18"/>
</dbReference>
<dbReference type="Ensembl" id="ENST00000439016.2">
    <molecule id="Q9UKT9-5"/>
    <property type="protein sequence ID" value="ENSP00000403027.2"/>
    <property type="gene ID" value="ENSG00000161405.18"/>
</dbReference>
<dbReference type="Ensembl" id="ENST00000439167.6">
    <molecule id="Q9UKT9-8"/>
    <property type="protein sequence ID" value="ENSP00000403776.2"/>
    <property type="gene ID" value="ENSG00000161405.18"/>
</dbReference>
<dbReference type="Ensembl" id="ENST00000467757.5">
    <molecule id="Q9UKT9-2"/>
    <property type="protein sequence ID" value="ENSP00000420463.1"/>
    <property type="gene ID" value="ENSG00000161405.18"/>
</dbReference>
<dbReference type="Ensembl" id="ENST00000535189.5">
    <molecule id="Q9UKT9-7"/>
    <property type="protein sequence ID" value="ENSP00000438972.1"/>
    <property type="gene ID" value="ENSG00000161405.18"/>
</dbReference>
<dbReference type="Ensembl" id="ENST00000583368.1">
    <molecule id="Q9UKT9-16"/>
    <property type="protein sequence ID" value="ENSP00000462452.1"/>
    <property type="gene ID" value="ENSG00000161405.18"/>
</dbReference>
<dbReference type="Ensembl" id="ENST00000623724.3">
    <molecule id="Q9UKT9-16"/>
    <property type="protein sequence ID" value="ENSP00000485515.1"/>
    <property type="gene ID" value="ENSG00000161405.18"/>
</dbReference>
<dbReference type="GeneID" id="22806"/>
<dbReference type="KEGG" id="hsa:22806"/>
<dbReference type="MANE-Select" id="ENST00000346872.8">
    <property type="protein sequence ID" value="ENSP00000344544.3"/>
    <property type="RefSeq nucleotide sequence ID" value="NM_012481.5"/>
    <property type="RefSeq protein sequence ID" value="NP_036613.2"/>
</dbReference>
<dbReference type="UCSC" id="uc002hsu.4">
    <molecule id="Q9UKT9-1"/>
    <property type="organism name" value="human"/>
</dbReference>
<dbReference type="AGR" id="HGNC:13178"/>
<dbReference type="CTD" id="22806"/>
<dbReference type="DisGeNET" id="22806"/>
<dbReference type="GeneCards" id="IKZF3"/>
<dbReference type="HGNC" id="HGNC:13178">
    <property type="gene designation" value="IKZF3"/>
</dbReference>
<dbReference type="HPA" id="ENSG00000161405">
    <property type="expression patterns" value="Group enriched (intestine, lymphoid tissue)"/>
</dbReference>
<dbReference type="MalaCards" id="IKZF3"/>
<dbReference type="MIM" id="606221">
    <property type="type" value="gene"/>
</dbReference>
<dbReference type="MIM" id="619437">
    <property type="type" value="phenotype"/>
</dbReference>
<dbReference type="neXtProt" id="NX_Q9UKT9"/>
<dbReference type="OpenTargets" id="ENSG00000161405"/>
<dbReference type="Orphanet" id="67038">
    <property type="disease" value="B-cell chronic lymphocytic leukemia"/>
</dbReference>
<dbReference type="PharmGKB" id="PA37750"/>
<dbReference type="VEuPathDB" id="HostDB:ENSG00000161405"/>
<dbReference type="eggNOG" id="KOG1721">
    <property type="taxonomic scope" value="Eukaryota"/>
</dbReference>
<dbReference type="GeneTree" id="ENSGT00940000160462"/>
<dbReference type="HOGENOM" id="CLU_025502_4_1_1"/>
<dbReference type="InParanoid" id="Q9UKT9"/>
<dbReference type="OMA" id="MMQGRMM"/>
<dbReference type="OrthoDB" id="6417347at2759"/>
<dbReference type="PAN-GO" id="Q9UKT9">
    <property type="GO annotations" value="3 GO annotations based on evolutionary models"/>
</dbReference>
<dbReference type="PhylomeDB" id="Q9UKT9"/>
<dbReference type="TreeFam" id="TF331189"/>
<dbReference type="PathwayCommons" id="Q9UKT9"/>
<dbReference type="SignaLink" id="Q9UKT9"/>
<dbReference type="SIGNOR" id="Q9UKT9"/>
<dbReference type="BioGRID-ORCS" id="22806">
    <property type="hits" value="27 hits in 1182 CRISPR screens"/>
</dbReference>
<dbReference type="ChiTaRS" id="IKZF3">
    <property type="organism name" value="human"/>
</dbReference>
<dbReference type="GeneWiki" id="IKZF3"/>
<dbReference type="GenomeRNAi" id="22806"/>
<dbReference type="Pharos" id="Q9UKT9">
    <property type="development level" value="Tbio"/>
</dbReference>
<dbReference type="PRO" id="PR:Q9UKT9"/>
<dbReference type="Proteomes" id="UP000005640">
    <property type="component" value="Chromosome 17"/>
</dbReference>
<dbReference type="RNAct" id="Q9UKT9">
    <property type="molecule type" value="protein"/>
</dbReference>
<dbReference type="Bgee" id="ENSG00000161405">
    <property type="expression patterns" value="Expressed in granulocyte and 106 other cell types or tissues"/>
</dbReference>
<dbReference type="ExpressionAtlas" id="Q9UKT9">
    <property type="expression patterns" value="baseline and differential"/>
</dbReference>
<dbReference type="GO" id="GO:0005737">
    <property type="term" value="C:cytoplasm"/>
    <property type="evidence" value="ECO:0000314"/>
    <property type="project" value="UniProtKB"/>
</dbReference>
<dbReference type="GO" id="GO:0005829">
    <property type="term" value="C:cytosol"/>
    <property type="evidence" value="ECO:0000314"/>
    <property type="project" value="HPA"/>
</dbReference>
<dbReference type="GO" id="GO:0005654">
    <property type="term" value="C:nucleoplasm"/>
    <property type="evidence" value="ECO:0000314"/>
    <property type="project" value="HPA"/>
</dbReference>
<dbReference type="GO" id="GO:0005634">
    <property type="term" value="C:nucleus"/>
    <property type="evidence" value="ECO:0000314"/>
    <property type="project" value="UniProtKB"/>
</dbReference>
<dbReference type="GO" id="GO:0001228">
    <property type="term" value="F:DNA-binding transcription activator activity, RNA polymerase II-specific"/>
    <property type="evidence" value="ECO:0000315"/>
    <property type="project" value="UniProtKB"/>
</dbReference>
<dbReference type="GO" id="GO:0003700">
    <property type="term" value="F:DNA-binding transcription factor activity"/>
    <property type="evidence" value="ECO:0000318"/>
    <property type="project" value="GO_Central"/>
</dbReference>
<dbReference type="GO" id="GO:0042826">
    <property type="term" value="F:histone deacetylase binding"/>
    <property type="evidence" value="ECO:0000353"/>
    <property type="project" value="UniProtKB"/>
</dbReference>
<dbReference type="GO" id="GO:0042802">
    <property type="term" value="F:identical protein binding"/>
    <property type="evidence" value="ECO:0000353"/>
    <property type="project" value="IntAct"/>
</dbReference>
<dbReference type="GO" id="GO:1990841">
    <property type="term" value="F:promoter-specific chromatin binding"/>
    <property type="evidence" value="ECO:0000314"/>
    <property type="project" value="UniProtKB"/>
</dbReference>
<dbReference type="GO" id="GO:0046982">
    <property type="term" value="F:protein heterodimerization activity"/>
    <property type="evidence" value="ECO:0000314"/>
    <property type="project" value="UniProtKB"/>
</dbReference>
<dbReference type="GO" id="GO:0042803">
    <property type="term" value="F:protein homodimerization activity"/>
    <property type="evidence" value="ECO:0000314"/>
    <property type="project" value="UniProtKB"/>
</dbReference>
<dbReference type="GO" id="GO:0000978">
    <property type="term" value="F:RNA polymerase II cis-regulatory region sequence-specific DNA binding"/>
    <property type="evidence" value="ECO:0000318"/>
    <property type="project" value="GO_Central"/>
</dbReference>
<dbReference type="GO" id="GO:0043565">
    <property type="term" value="F:sequence-specific DNA binding"/>
    <property type="evidence" value="ECO:0000314"/>
    <property type="project" value="UniProtKB"/>
</dbReference>
<dbReference type="GO" id="GO:0008270">
    <property type="term" value="F:zinc ion binding"/>
    <property type="evidence" value="ECO:0007669"/>
    <property type="project" value="UniProtKB-KW"/>
</dbReference>
<dbReference type="GO" id="GO:0030183">
    <property type="term" value="P:B cell differentiation"/>
    <property type="evidence" value="ECO:0007669"/>
    <property type="project" value="Ensembl"/>
</dbReference>
<dbReference type="GO" id="GO:0007498">
    <property type="term" value="P:mesoderm development"/>
    <property type="evidence" value="ECO:0000304"/>
    <property type="project" value="ProtInc"/>
</dbReference>
<dbReference type="GO" id="GO:0042981">
    <property type="term" value="P:regulation of apoptotic process"/>
    <property type="evidence" value="ECO:0000315"/>
    <property type="project" value="UniProtKB"/>
</dbReference>
<dbReference type="GO" id="GO:0045577">
    <property type="term" value="P:regulation of B cell differentiation"/>
    <property type="evidence" value="ECO:0000250"/>
    <property type="project" value="UniProtKB"/>
</dbReference>
<dbReference type="GO" id="GO:0030888">
    <property type="term" value="P:regulation of B cell proliferation"/>
    <property type="evidence" value="ECO:0000250"/>
    <property type="project" value="UniProtKB"/>
</dbReference>
<dbReference type="GO" id="GO:0045619">
    <property type="term" value="P:regulation of lymphocyte differentiation"/>
    <property type="evidence" value="ECO:0000250"/>
    <property type="project" value="UniProtKB"/>
</dbReference>
<dbReference type="GO" id="GO:0006357">
    <property type="term" value="P:regulation of transcription by RNA polymerase II"/>
    <property type="evidence" value="ECO:0000318"/>
    <property type="project" value="GO_Central"/>
</dbReference>
<dbReference type="GO" id="GO:0009617">
    <property type="term" value="P:response to bacterium"/>
    <property type="evidence" value="ECO:0007669"/>
    <property type="project" value="Ensembl"/>
</dbReference>
<dbReference type="GO" id="GO:0030217">
    <property type="term" value="P:T cell differentiation"/>
    <property type="evidence" value="ECO:0007669"/>
    <property type="project" value="Ensembl"/>
</dbReference>
<dbReference type="FunFam" id="3.30.160.60:FF:000073">
    <property type="entry name" value="IKAROS family zinc finger 1"/>
    <property type="match status" value="1"/>
</dbReference>
<dbReference type="FunFam" id="3.30.160.60:FF:000265">
    <property type="entry name" value="IKAROS family zinc finger 1"/>
    <property type="match status" value="1"/>
</dbReference>
<dbReference type="FunFam" id="3.30.160.60:FF:002057">
    <property type="entry name" value="IKAROS family zinc finger 3"/>
    <property type="match status" value="1"/>
</dbReference>
<dbReference type="FunFam" id="3.30.160.60:FF:002372">
    <property type="entry name" value="IKAROS family zinc finger 3"/>
    <property type="match status" value="1"/>
</dbReference>
<dbReference type="FunFam" id="3.30.160.60:FF:000080">
    <property type="entry name" value="IKAROS family zinc finger 4"/>
    <property type="match status" value="1"/>
</dbReference>
<dbReference type="Gene3D" id="3.30.160.60">
    <property type="entry name" value="Classic Zinc Finger"/>
    <property type="match status" value="5"/>
</dbReference>
<dbReference type="InterPro" id="IPR050589">
    <property type="entry name" value="Ikaros_C2H2-ZF"/>
</dbReference>
<dbReference type="InterPro" id="IPR036236">
    <property type="entry name" value="Znf_C2H2_sf"/>
</dbReference>
<dbReference type="InterPro" id="IPR013087">
    <property type="entry name" value="Znf_C2H2_type"/>
</dbReference>
<dbReference type="PANTHER" id="PTHR24404">
    <property type="entry name" value="ZINC FINGER PROTEIN"/>
    <property type="match status" value="1"/>
</dbReference>
<dbReference type="PANTHER" id="PTHR24404:SF23">
    <property type="entry name" value="ZINC FINGER PROTEIN AIOLOS"/>
    <property type="match status" value="1"/>
</dbReference>
<dbReference type="Pfam" id="PF00096">
    <property type="entry name" value="zf-C2H2"/>
    <property type="match status" value="2"/>
</dbReference>
<dbReference type="SMART" id="SM00355">
    <property type="entry name" value="ZnF_C2H2"/>
    <property type="match status" value="6"/>
</dbReference>
<dbReference type="SUPFAM" id="SSF57667">
    <property type="entry name" value="beta-beta-alpha zinc fingers"/>
    <property type="match status" value="3"/>
</dbReference>
<dbReference type="PROSITE" id="PS00028">
    <property type="entry name" value="ZINC_FINGER_C2H2_1"/>
    <property type="match status" value="4"/>
</dbReference>
<dbReference type="PROSITE" id="PS50157">
    <property type="entry name" value="ZINC_FINGER_C2H2_2"/>
    <property type="match status" value="4"/>
</dbReference>